<name>CRY1_ARATH</name>
<reference key="1">
    <citation type="journal article" date="1993" name="Nature">
        <title>HY4 gene of A. thaliana encodes a protein with characteristics of a blue-light photoreceptor.</title>
        <authorList>
            <person name="Ahmad M."/>
            <person name="Cashmore A.R."/>
        </authorList>
    </citation>
    <scope>NUCLEOTIDE SEQUENCE [MRNA]</scope>
    <source>
        <strain>cv. Columbia</strain>
    </source>
</reference>
<reference key="2">
    <citation type="journal article" date="1999" name="Nature">
        <title>Sequence and analysis of chromosome 4 of the plant Arabidopsis thaliana.</title>
        <authorList>
            <person name="Mayer K.F.X."/>
            <person name="Schueller C."/>
            <person name="Wambutt R."/>
            <person name="Murphy G."/>
            <person name="Volckaert G."/>
            <person name="Pohl T."/>
            <person name="Duesterhoeft A."/>
            <person name="Stiekema W."/>
            <person name="Entian K.-D."/>
            <person name="Terryn N."/>
            <person name="Harris B."/>
            <person name="Ansorge W."/>
            <person name="Brandt P."/>
            <person name="Grivell L.A."/>
            <person name="Rieger M."/>
            <person name="Weichselgartner M."/>
            <person name="de Simone V."/>
            <person name="Obermaier B."/>
            <person name="Mache R."/>
            <person name="Mueller M."/>
            <person name="Kreis M."/>
            <person name="Delseny M."/>
            <person name="Puigdomenech P."/>
            <person name="Watson M."/>
            <person name="Schmidtheini T."/>
            <person name="Reichert B."/>
            <person name="Portetelle D."/>
            <person name="Perez-Alonso M."/>
            <person name="Boutry M."/>
            <person name="Bancroft I."/>
            <person name="Vos P."/>
            <person name="Hoheisel J."/>
            <person name="Zimmermann W."/>
            <person name="Wedler H."/>
            <person name="Ridley P."/>
            <person name="Langham S.-A."/>
            <person name="McCullagh B."/>
            <person name="Bilham L."/>
            <person name="Robben J."/>
            <person name="van der Schueren J."/>
            <person name="Grymonprez B."/>
            <person name="Chuang Y.-J."/>
            <person name="Vandenbussche F."/>
            <person name="Braeken M."/>
            <person name="Weltjens I."/>
            <person name="Voet M."/>
            <person name="Bastiaens I."/>
            <person name="Aert R."/>
            <person name="Defoor E."/>
            <person name="Weitzenegger T."/>
            <person name="Bothe G."/>
            <person name="Ramsperger U."/>
            <person name="Hilbert H."/>
            <person name="Braun M."/>
            <person name="Holzer E."/>
            <person name="Brandt A."/>
            <person name="Peters S."/>
            <person name="van Staveren M."/>
            <person name="Dirkse W."/>
            <person name="Mooijman P."/>
            <person name="Klein Lankhorst R."/>
            <person name="Rose M."/>
            <person name="Hauf J."/>
            <person name="Koetter P."/>
            <person name="Berneiser S."/>
            <person name="Hempel S."/>
            <person name="Feldpausch M."/>
            <person name="Lamberth S."/>
            <person name="Van den Daele H."/>
            <person name="De Keyser A."/>
            <person name="Buysshaert C."/>
            <person name="Gielen J."/>
            <person name="Villarroel R."/>
            <person name="De Clercq R."/>
            <person name="van Montagu M."/>
            <person name="Rogers J."/>
            <person name="Cronin A."/>
            <person name="Quail M.A."/>
            <person name="Bray-Allen S."/>
            <person name="Clark L."/>
            <person name="Doggett J."/>
            <person name="Hall S."/>
            <person name="Kay M."/>
            <person name="Lennard N."/>
            <person name="McLay K."/>
            <person name="Mayes R."/>
            <person name="Pettett A."/>
            <person name="Rajandream M.A."/>
            <person name="Lyne M."/>
            <person name="Benes V."/>
            <person name="Rechmann S."/>
            <person name="Borkova D."/>
            <person name="Bloecker H."/>
            <person name="Scharfe M."/>
            <person name="Grimm M."/>
            <person name="Loehnert T.-H."/>
            <person name="Dose S."/>
            <person name="de Haan M."/>
            <person name="Maarse A.C."/>
            <person name="Schaefer M."/>
            <person name="Mueller-Auer S."/>
            <person name="Gabel C."/>
            <person name="Fuchs M."/>
            <person name="Fartmann B."/>
            <person name="Granderath K."/>
            <person name="Dauner D."/>
            <person name="Herzl A."/>
            <person name="Neumann S."/>
            <person name="Argiriou A."/>
            <person name="Vitale D."/>
            <person name="Liguori R."/>
            <person name="Piravandi E."/>
            <person name="Massenet O."/>
            <person name="Quigley F."/>
            <person name="Clabauld G."/>
            <person name="Muendlein A."/>
            <person name="Felber R."/>
            <person name="Schnabl S."/>
            <person name="Hiller R."/>
            <person name="Schmidt W."/>
            <person name="Lecharny A."/>
            <person name="Aubourg S."/>
            <person name="Chefdor F."/>
            <person name="Cooke R."/>
            <person name="Berger C."/>
            <person name="Monfort A."/>
            <person name="Casacuberta E."/>
            <person name="Gibbons T."/>
            <person name="Weber N."/>
            <person name="Vandenbol M."/>
            <person name="Bargues M."/>
            <person name="Terol J."/>
            <person name="Torres A."/>
            <person name="Perez-Perez A."/>
            <person name="Purnelle B."/>
            <person name="Bent E."/>
            <person name="Johnson S."/>
            <person name="Tacon D."/>
            <person name="Jesse T."/>
            <person name="Heijnen L."/>
            <person name="Schwarz S."/>
            <person name="Scholler P."/>
            <person name="Heber S."/>
            <person name="Francs P."/>
            <person name="Bielke C."/>
            <person name="Frishman D."/>
            <person name="Haase D."/>
            <person name="Lemcke K."/>
            <person name="Mewes H.-W."/>
            <person name="Stocker S."/>
            <person name="Zaccaria P."/>
            <person name="Bevan M."/>
            <person name="Wilson R.K."/>
            <person name="de la Bastide M."/>
            <person name="Habermann K."/>
            <person name="Parnell L."/>
            <person name="Dedhia N."/>
            <person name="Gnoj L."/>
            <person name="Schutz K."/>
            <person name="Huang E."/>
            <person name="Spiegel L."/>
            <person name="Sekhon M."/>
            <person name="Murray J."/>
            <person name="Sheet P."/>
            <person name="Cordes M."/>
            <person name="Abu-Threideh J."/>
            <person name="Stoneking T."/>
            <person name="Kalicki J."/>
            <person name="Graves T."/>
            <person name="Harmon G."/>
            <person name="Edwards J."/>
            <person name="Latreille P."/>
            <person name="Courtney L."/>
            <person name="Cloud J."/>
            <person name="Abbott A."/>
            <person name="Scott K."/>
            <person name="Johnson D."/>
            <person name="Minx P."/>
            <person name="Bentley D."/>
            <person name="Fulton B."/>
            <person name="Miller N."/>
            <person name="Greco T."/>
            <person name="Kemp K."/>
            <person name="Kramer J."/>
            <person name="Fulton L."/>
            <person name="Mardis E."/>
            <person name="Dante M."/>
            <person name="Pepin K."/>
            <person name="Hillier L.W."/>
            <person name="Nelson J."/>
            <person name="Spieth J."/>
            <person name="Ryan E."/>
            <person name="Andrews S."/>
            <person name="Geisel C."/>
            <person name="Layman D."/>
            <person name="Du H."/>
            <person name="Ali J."/>
            <person name="Berghoff A."/>
            <person name="Jones K."/>
            <person name="Drone K."/>
            <person name="Cotton M."/>
            <person name="Joshu C."/>
            <person name="Antonoiu B."/>
            <person name="Zidanic M."/>
            <person name="Strong C."/>
            <person name="Sun H."/>
            <person name="Lamar B."/>
            <person name="Yordan C."/>
            <person name="Ma P."/>
            <person name="Zhong J."/>
            <person name="Preston R."/>
            <person name="Vil D."/>
            <person name="Shekher M."/>
            <person name="Matero A."/>
            <person name="Shah R."/>
            <person name="Swaby I.K."/>
            <person name="O'Shaughnessy A."/>
            <person name="Rodriguez M."/>
            <person name="Hoffman J."/>
            <person name="Till S."/>
            <person name="Granat S."/>
            <person name="Shohdy N."/>
            <person name="Hasegawa A."/>
            <person name="Hameed A."/>
            <person name="Lodhi M."/>
            <person name="Johnson A."/>
            <person name="Chen E."/>
            <person name="Marra M.A."/>
            <person name="Martienssen R."/>
            <person name="McCombie W.R."/>
        </authorList>
    </citation>
    <scope>NUCLEOTIDE SEQUENCE [LARGE SCALE GENOMIC DNA]</scope>
    <source>
        <strain>cv. Columbia</strain>
    </source>
</reference>
<reference key="3">
    <citation type="journal article" date="2017" name="Plant J.">
        <title>Araport11: a complete reannotation of the Arabidopsis thaliana reference genome.</title>
        <authorList>
            <person name="Cheng C.Y."/>
            <person name="Krishnakumar V."/>
            <person name="Chan A.P."/>
            <person name="Thibaud-Nissen F."/>
            <person name="Schobel S."/>
            <person name="Town C.D."/>
        </authorList>
    </citation>
    <scope>GENOME REANNOTATION</scope>
    <source>
        <strain>cv. Columbia</strain>
    </source>
</reference>
<reference key="4">
    <citation type="journal article" date="2003" name="Science">
        <title>Empirical analysis of transcriptional activity in the Arabidopsis genome.</title>
        <authorList>
            <person name="Yamada K."/>
            <person name="Lim J."/>
            <person name="Dale J.M."/>
            <person name="Chen H."/>
            <person name="Shinn P."/>
            <person name="Palm C.J."/>
            <person name="Southwick A.M."/>
            <person name="Wu H.C."/>
            <person name="Kim C.J."/>
            <person name="Nguyen M."/>
            <person name="Pham P.K."/>
            <person name="Cheuk R.F."/>
            <person name="Karlin-Newmann G."/>
            <person name="Liu S.X."/>
            <person name="Lam B."/>
            <person name="Sakano H."/>
            <person name="Wu T."/>
            <person name="Yu G."/>
            <person name="Miranda M."/>
            <person name="Quach H.L."/>
            <person name="Tripp M."/>
            <person name="Chang C.H."/>
            <person name="Lee J.M."/>
            <person name="Toriumi M.J."/>
            <person name="Chan M.M."/>
            <person name="Tang C.C."/>
            <person name="Onodera C.S."/>
            <person name="Deng J.M."/>
            <person name="Akiyama K."/>
            <person name="Ansari Y."/>
            <person name="Arakawa T."/>
            <person name="Banh J."/>
            <person name="Banno F."/>
            <person name="Bowser L."/>
            <person name="Brooks S.Y."/>
            <person name="Carninci P."/>
            <person name="Chao Q."/>
            <person name="Choy N."/>
            <person name="Enju A."/>
            <person name="Goldsmith A.D."/>
            <person name="Gurjal M."/>
            <person name="Hansen N.F."/>
            <person name="Hayashizaki Y."/>
            <person name="Johnson-Hopson C."/>
            <person name="Hsuan V.W."/>
            <person name="Iida K."/>
            <person name="Karnes M."/>
            <person name="Khan S."/>
            <person name="Koesema E."/>
            <person name="Ishida J."/>
            <person name="Jiang P.X."/>
            <person name="Jones T."/>
            <person name="Kawai J."/>
            <person name="Kamiya A."/>
            <person name="Meyers C."/>
            <person name="Nakajima M."/>
            <person name="Narusaka M."/>
            <person name="Seki M."/>
            <person name="Sakurai T."/>
            <person name="Satou M."/>
            <person name="Tamse R."/>
            <person name="Vaysberg M."/>
            <person name="Wallender E.K."/>
            <person name="Wong C."/>
            <person name="Yamamura Y."/>
            <person name="Yuan S."/>
            <person name="Shinozaki K."/>
            <person name="Davis R.W."/>
            <person name="Theologis A."/>
            <person name="Ecker J.R."/>
        </authorList>
    </citation>
    <scope>NUCLEOTIDE SEQUENCE [LARGE SCALE MRNA]</scope>
    <source>
        <strain>cv. Columbia</strain>
    </source>
</reference>
<reference key="5">
    <citation type="journal article" date="1991" name="Plant Cell">
        <title>Arabidopsis mutants lacking blue light-dependent inhibition of hypocotyl elongation.</title>
        <authorList>
            <person name="Liscum E."/>
            <person name="Hangarter R.P."/>
        </authorList>
    </citation>
    <scope>FUNCTION</scope>
    <scope>DISRUPTION PHENOTYPE</scope>
</reference>
<reference key="6">
    <citation type="journal article" date="1995" name="Biochemistry">
        <title>Putative blue-light photoreceptors from Arabidopsis thaliana and Sinapis alba with a high degree of sequence homology to DNA photolyase contain the two photolyase cofactors but lack DNA repair activity.</title>
        <authorList>
            <person name="Malhotra K."/>
            <person name="Kim S.-T."/>
            <person name="Batschauer A."/>
            <person name="Dawut L."/>
            <person name="Sancar A."/>
        </authorList>
    </citation>
    <scope>FUNCTION</scope>
    <scope>COFACTOR</scope>
</reference>
<reference key="7">
    <citation type="journal article" date="1995" name="Plant J.">
        <title>Mutations throughout an Arabidopsis blue-light photoreceptor impair blue-light-responsive anthocyanin accumulation and inhibition of hypocotyl elongation.</title>
        <authorList>
            <person name="Ahmad M."/>
            <person name="Lin C."/>
            <person name="Cashmore A.R."/>
        </authorList>
    </citation>
    <scope>FUNCTION</scope>
    <scope>DISRUPTION PHENOTYPE</scope>
    <scope>MUTAGENESIS OF GLY-220; GLY-283; GLY-340; GLY-347; GLU-515; GLU-531; PRO-549; GLU-559; ARG-576; ARG-581 AND ARG-611</scope>
</reference>
<reference key="8">
    <citation type="journal article" date="1996" name="Plant J.">
        <title>Arabidopsis cryptochrome 1 is a soluble protein mediating blue light-dependent regulation of plant growth and development.</title>
        <authorList>
            <person name="Lin C."/>
            <person name="Ahmad M."/>
            <person name="Cashmore A.R."/>
        </authorList>
    </citation>
    <scope>CHARACTERIZATION</scope>
</reference>
<reference key="9">
    <citation type="journal article" date="1998" name="Nature">
        <title>Cryptochrome blue-light photoreceptors of Arabidopsis implicated in phototropism.</title>
        <authorList>
            <person name="Ahmad M."/>
            <person name="Jarillo J.A."/>
            <person name="Smirnova O."/>
            <person name="Cashmore A.R."/>
        </authorList>
    </citation>
    <scope>FUNCTION</scope>
    <scope>MUTAGENESIS OF GLY-340</scope>
</reference>
<reference key="10">
    <citation type="journal article" date="1998" name="Mol. Cell">
        <title>The CRY1 blue light photoreceptor of Arabidopsis interacts with phytochrome A in vitro.</title>
        <authorList>
            <person name="Ahmad M."/>
            <person name="Jarillo J.A."/>
            <person name="Smirnova O."/>
            <person name="Cashmore A.R."/>
        </authorList>
    </citation>
    <scope>INTERACTION WITH PHYA</scope>
    <scope>PHOSPHORYLATION</scope>
</reference>
<reference key="11">
    <citation type="journal article" date="1998" name="Plant Physiol.">
        <title>Genetic interactions between phytochrome A, phytochrome B, and cryptochrome 1 during Arabidopsis development.</title>
        <authorList>
            <person name="Neff M.M."/>
            <person name="Chory J."/>
        </authorList>
    </citation>
    <scope>FUNCTION</scope>
    <scope>DISRUPTION PHENOTYPE</scope>
    <source>
        <strain>cv. Landsberg erecta</strain>
    </source>
</reference>
<reference key="12">
    <citation type="journal article" date="1998" name="Plant Physiol.">
        <title>Two genetically separable phases of growth inhibition induced by blue light in Arabidopsis seedlings.</title>
        <authorList>
            <person name="Parks B.M."/>
            <person name="Cho M.H."/>
            <person name="Spalding E.P."/>
        </authorList>
    </citation>
    <scope>FUNCTION</scope>
    <scope>DISRUPTION PHENOTYPE</scope>
    <source>
        <strain>cv. Landsberg erecta</strain>
    </source>
</reference>
<reference key="13">
    <citation type="journal article" date="2000" name="Cell">
        <title>The C termini of Arabidopsis cryptochromes mediate a constitutive light response.</title>
        <authorList>
            <person name="Yang H.-Q."/>
            <person name="Wu Y.-J."/>
            <person name="Tang R.-H."/>
            <person name="Liu D."/>
            <person name="Liu Y."/>
            <person name="Cashmore A.R."/>
        </authorList>
    </citation>
    <scope>DOMAINS</scope>
</reference>
<reference key="14">
    <citation type="journal article" date="2001" name="Nature">
        <title>An Arabidopsis circadian clock component interacts with both CRY1 and phyB.</title>
        <authorList>
            <person name="Jarillo J.A."/>
            <person name="Capel J."/>
            <person name="Tang R.-H."/>
            <person name="Yang H.-Q."/>
            <person name="Alonso J.M."/>
            <person name="Ecker J.R."/>
            <person name="Cashmore A.R."/>
        </authorList>
    </citation>
    <scope>INTERACTION WITH ADO1</scope>
</reference>
<reference key="15">
    <citation type="journal article" date="2001" name="Science">
        <title>Direct interaction of Arabidopsis cryptochromes with COP1 in light control development.</title>
        <authorList>
            <person name="Wang H."/>
            <person name="Ma L.-G."/>
            <person name="Li J.-M."/>
            <person name="Zhao H.-Y."/>
            <person name="Deng X.W."/>
        </authorList>
    </citation>
    <scope>INTERACTION WITH COP1</scope>
</reference>
<reference key="16">
    <citation type="journal article" date="2001" name="Plant Cell">
        <title>The signaling mechanism of Arabidopsis CRY1 involves direct interaction with COP1.</title>
        <authorList>
            <person name="Yang H.-Q."/>
            <person name="Tang R.-H."/>
            <person name="Cashmore A.R."/>
        </authorList>
    </citation>
    <scope>INTERACTION WITH COP1</scope>
</reference>
<reference key="17">
    <citation type="journal article" date="2001" name="Plant Physiol.">
        <title>Circadian clock-regulated expression of phytochrome and cryptochrome genes in Arabidopsis.</title>
        <authorList>
            <person name="Toth R."/>
            <person name="Kevei E."/>
            <person name="Hall A."/>
            <person name="Millar A.J."/>
            <person name="Nagy F."/>
            <person name="Kozma-Bognar L."/>
        </authorList>
    </citation>
    <scope>INDUCTION BY CIRCADIAN CLOCK AND LIGHT</scope>
    <scope>TISSUE SPECIFICITY</scope>
</reference>
<reference key="18">
    <citation type="journal article" date="2003" name="Eur. J. Biochem.">
        <title>Novel ATP-binding and autophosphorylation activity associated with Arabidopsis and human cryptochrome-1.</title>
        <authorList>
            <person name="Bouly J.-P."/>
            <person name="Giovani B."/>
            <person name="Djamei A."/>
            <person name="Mueller M."/>
            <person name="Zeugner A."/>
            <person name="Dudkin E.A."/>
            <person name="Batschauer A."/>
            <person name="Ahmad M."/>
        </authorList>
    </citation>
    <scope>PHOSPHORYLATION</scope>
</reference>
<reference key="19">
    <citation type="journal article" date="2003" name="Plant Cell">
        <title>Blue light-dependent in vivo and in vitro phosphorylation of Arabidopsis cryptochrome 1.</title>
        <authorList>
            <person name="Shalitin D."/>
            <person name="Yu X."/>
            <person name="Maymon M."/>
            <person name="Mockler T."/>
            <person name="Lin C."/>
        </authorList>
    </citation>
    <scope>PHOSPHORYLATION</scope>
</reference>
<reference key="20">
    <citation type="journal article" date="2003" name="Plant Physiol.">
        <title>Second positive phototropism results from coordinated co-action of the phototropins and cryptochromes.</title>
        <authorList>
            <person name="Whippo C.W."/>
            <person name="Hangarter R.P."/>
        </authorList>
    </citation>
    <scope>FUNCTION</scope>
    <scope>DISRUPTION PHENOTYPE</scope>
</reference>
<reference key="21">
    <citation type="journal article" date="2005" name="Proc. Natl. Acad. Sci. U.S.A.">
        <title>A role for Arabidopsis cryptochromes and COP1 in the regulation of stomatal opening.</title>
        <authorList>
            <person name="Mao J."/>
            <person name="Zhang Y.C."/>
            <person name="Sang Y."/>
            <person name="Li Q.H."/>
            <person name="Yang H.Q."/>
        </authorList>
    </citation>
    <scope>FUNCTION</scope>
</reference>
<reference key="22">
    <citation type="journal article" date="2005" name="Biochemistry">
        <title>Role of structural plasticity in signal transduction by the cryptochrome blue-light photoreceptor.</title>
        <authorList>
            <person name="Partch C.L."/>
            <person name="Clarkson M.W."/>
            <person name="Ozgur S."/>
            <person name="Lee A.L."/>
            <person name="Sancar A."/>
        </authorList>
    </citation>
    <scope>ACTIVITY REGULATION</scope>
</reference>
<reference key="23">
    <citation type="journal article" date="2005" name="Plant Cell">
        <title>N-terminal domain-mediated homodimerization is required for photoreceptor activity of Arabidopsis CRYPTOCHROME 1.</title>
        <authorList>
            <person name="Sang Y."/>
            <person name="Li Q.-H."/>
            <person name="Rubio V."/>
            <person name="Zhang Y.-C."/>
            <person name="Mao J."/>
            <person name="Deng X.-W."/>
            <person name="Yang H.-Q."/>
        </authorList>
    </citation>
    <scope>SUBUNIT</scope>
    <scope>MUTAGENESIS OF SER-66; GLY-347 AND ALA-462</scope>
</reference>
<reference key="24">
    <citation type="journal article" date="2005" name="Plant J.">
        <title>High-throughput protein localization in Arabidopsis using Agrobacterium-mediated transient expression of GFP-ORF fusions.</title>
        <authorList>
            <person name="Koroleva O.A."/>
            <person name="Tomlinson M.L."/>
            <person name="Leader D."/>
            <person name="Shaw P."/>
            <person name="Doonan J.H."/>
        </authorList>
    </citation>
    <scope>SUBCELLULAR LOCATION</scope>
</reference>
<reference key="25">
    <citation type="journal article" date="2006" name="Biochemistry">
        <title>Analysis of autophosphorylating kinase activities of Arabidopsis and human cryptochromes.</title>
        <authorList>
            <person name="Ozguer S."/>
            <person name="Sancar A."/>
        </authorList>
    </citation>
    <scope>AUTOPHOSPHORYLATION</scope>
    <scope>COFACTOR</scope>
    <scope>ATP-BINDING</scope>
</reference>
<reference key="26">
    <citation type="journal article" date="2006" name="Planta">
        <title>Cryptochrome photoreceptors cry1 and cry2 antagonistically regulate primary root elongation in Arabidopsis thaliana.</title>
        <authorList>
            <person name="Canamero R.C."/>
            <person name="Bakrim N."/>
            <person name="Bouly J.-P."/>
            <person name="Garay A."/>
            <person name="Dudkin E.E."/>
            <person name="Habricot Y."/>
            <person name="Ahmad M."/>
        </authorList>
    </citation>
    <scope>FUNCTION</scope>
    <scope>DISRUPTION PHENOTYPE</scope>
</reference>
<reference key="27">
    <citation type="journal article" date="2006" name="Proc. Natl. Acad. Sci. U.S.A.">
        <title>Cryptochrome-1-dependent execution of programmed cell death induced by singlet oxygen in Arabidopsis thaliana.</title>
        <authorList>
            <person name="Danon A."/>
            <person name="Coll N.S."/>
            <person name="Apel K."/>
        </authorList>
    </citation>
    <scope>FUNCTION IN PCD</scope>
    <scope>DISRUPTION PHENOTYPE</scope>
</reference>
<reference key="28">
    <citation type="journal article" date="2007" name="Plant Cell">
        <title>Plastid signals remodel light signaling networks and are essential for efficient chloroplast biogenesis in Arabidopsis.</title>
        <authorList>
            <person name="Ruckle M.E."/>
            <person name="DeMarco S.M."/>
            <person name="Larkin R.M."/>
        </authorList>
    </citation>
    <scope>MUTAGENESIS OF ASP-21; SER-286; GLY-340 AND GLU-623</scope>
    <source>
        <strain>cv. Columbia</strain>
    </source>
</reference>
<reference key="29">
    <citation type="journal article" date="2007" name="Proc. Natl. Acad. Sci. U.S.A.">
        <title>Separate functions for nuclear and cytoplasmic cryptochrome 1 during photomorphogenesis of Arabidopsis seedlings.</title>
        <authorList>
            <person name="Wu G."/>
            <person name="Spalding E.P."/>
        </authorList>
    </citation>
    <scope>SUBCELLULAR LOCATION</scope>
</reference>
<reference key="30">
    <citation type="journal article" date="2008" name="Plant J.">
        <title>CRY1 inhibits COP1-mediated degradation of BIT1, a MYB transcription factor, to activate blue light-dependent gene expression in Arabidopsis.</title>
        <authorList>
            <person name="Hong S.H."/>
            <person name="Kim H.J."/>
            <person name="Ryu J.S."/>
            <person name="Choi H."/>
            <person name="Jeong S."/>
            <person name="Shin J."/>
            <person name="Choi G."/>
            <person name="Nam H.G."/>
        </authorList>
    </citation>
    <scope>FUNCTION</scope>
</reference>
<reference key="31">
    <citation type="journal article" date="2009" name="FEBS Lett.">
        <title>Conformational change induced by ATP binding correlates with enhanced biological function of Arabidopsis cryptochrome.</title>
        <authorList>
            <person name="Burney S."/>
            <person name="Hoang N."/>
            <person name="Caruso M."/>
            <person name="Dudkin E.A."/>
            <person name="Ahmad M."/>
            <person name="Bouly J.-P."/>
        </authorList>
    </citation>
    <scope>ATP BINDING</scope>
</reference>
<reference key="32">
    <citation type="journal article" date="2009" name="New Phytol.">
        <title>Differential petiole growth in Arabidopsis thaliana: photocontrol and hormonal regulation.</title>
        <authorList>
            <person name="Millenaar F.F."/>
            <person name="van Zanten M."/>
            <person name="Cox M.C."/>
            <person name="Pierik R."/>
            <person name="Voesenek L.A."/>
            <person name="Peeters A.J."/>
        </authorList>
    </citation>
    <scope>FUNCTION</scope>
    <scope>DISRUPTION PHENOTYPE</scope>
    <source>
        <strain>cv. Columbia</strain>
    </source>
</reference>
<reference key="33">
    <citation type="journal article" date="2010" name="Arabidopsis Book">
        <title>The cryptochrome blue light receptors.</title>
        <authorList>
            <person name="Yu X."/>
            <person name="Liu H."/>
            <person name="Klejnot J."/>
            <person name="Lin C."/>
        </authorList>
    </citation>
    <scope>REVIEW ON CRYPTOCHROMES</scope>
</reference>
<reference key="34">
    <citation type="journal article" date="2010" name="Curr. Top. Dev. Biol.">
        <title>Light-regulated plant growth and development.</title>
        <authorList>
            <person name="Kami C."/>
            <person name="Lorrain S."/>
            <person name="Hornitschek P."/>
            <person name="Fankhauser C."/>
        </authorList>
    </citation>
    <scope>REVIEW ON PHOTORECEPTORS</scope>
</reference>
<reference key="35">
    <citation type="journal article" date="2010" name="J. Plant Physiol.">
        <title>Arabidopsis cryptochrome-1 restrains lateral roots growth by inhibiting auxin transport.</title>
        <authorList>
            <person name="Zeng J."/>
            <person name="Wang Q."/>
            <person name="Lin J."/>
            <person name="Deng K."/>
            <person name="Zhao X."/>
            <person name="Tang D."/>
            <person name="Liu X."/>
        </authorList>
    </citation>
    <scope>FUNCTION</scope>
    <scope>DISRUPTION PHENOTYPE</scope>
</reference>
<reference key="36">
    <citation type="journal article" date="2010" name="Mol. Plant">
        <title>CRYPTOCHROME 1 is implicated in promoting R protein-mediated plant resistance to Pseudomonas syringae in Arabidopsis.</title>
        <authorList>
            <person name="Wu L."/>
            <person name="Yang H.-Q."/>
        </authorList>
    </citation>
    <scope>FUNCTION</scope>
    <scope>DISRUPTION PHENOTYPE</scope>
    <source>
        <strain>cv. Columbia</strain>
    </source>
</reference>
<reference key="37">
    <citation type="journal article" date="2010" name="Plant Physiol.">
        <title>Cryptochrome as a sensor of the blue/green ratio of natural radiation in Arabidopsis.</title>
        <authorList>
            <person name="Sellaro R."/>
            <person name="Crepy M."/>
            <person name="Trupkin S.A."/>
            <person name="Karayekov E."/>
            <person name="Buchovsky A.S."/>
            <person name="Rossi C."/>
            <person name="Casal J.J."/>
        </authorList>
    </citation>
    <scope>FUNCTION</scope>
    <scope>DISRUPTION PHENOTYPE</scope>
    <source>
        <strain>cv. Landsberg erecta</strain>
    </source>
</reference>
<reference key="38">
    <citation type="journal article" date="2010" name="Plant Physiol.">
        <title>A gain-of-function mutation of Arabidopsis cryptochrome1 promotes flowering.</title>
        <authorList>
            <person name="Exner V."/>
            <person name="Alexandre C."/>
            <person name="Rosenfeldt G."/>
            <person name="Alfarano P."/>
            <person name="Nater M."/>
            <person name="Caflisch A."/>
            <person name="Gruissem W."/>
            <person name="Batschauer A."/>
            <person name="Hennig L."/>
        </authorList>
    </citation>
    <scope>MUTAGENESIS OF LEU-407</scope>
    <source>
        <strain>cv. Columbia</strain>
        <strain>cv. Landsberg erecta</strain>
    </source>
</reference>
<reference key="39">
    <citation type="journal article" date="2011" name="Genes Dev.">
        <title>Blue-light-dependent interaction of cryptochrome 1 with SPA1 defines a dynamic signaling mechanism.</title>
        <authorList>
            <person name="Lian H.-L."/>
            <person name="He S.-B."/>
            <person name="Zhang Y.-C."/>
            <person name="Zhu D.-M."/>
            <person name="Zhang J.-Y."/>
            <person name="Jia K.-P."/>
            <person name="Sun S.-X."/>
            <person name="Li L."/>
            <person name="Yang H.-Q."/>
        </authorList>
    </citation>
    <scope>FUNCTION</scope>
    <scope>DISRUPTION PHENOTYPE</scope>
    <scope>SUBCELLULAR LOCATION</scope>
    <scope>INTERACTION WITH SPA1</scope>
    <source>
        <strain>cv. Columbia</strain>
    </source>
</reference>
<reference key="40">
    <citation type="journal article" date="2011" name="Genes Dev.">
        <title>Arabidopsis cryptochrome 1 interacts with SPA1 to suppress COP1 activity in response to blue light.</title>
        <authorList>
            <person name="Liu B."/>
            <person name="Zuo Z."/>
            <person name="Liu H."/>
            <person name="Liu X."/>
            <person name="Lin C."/>
        </authorList>
    </citation>
    <scope>FUNCTION</scope>
    <scope>DISRUPTION PHENOTYPE</scope>
    <scope>INTERACTION WITH SPA1 AND SPA4</scope>
</reference>
<reference key="41">
    <citation type="journal article" date="2011" name="J. Biol. Chem.">
        <title>Light-activated cryptochrome reacts with molecular oxygen to form a flavin-superoxide radical pair consistent with magnetoreception.</title>
        <authorList>
            <person name="Mueller P."/>
            <person name="Ahmad M."/>
        </authorList>
    </citation>
    <scope>FUNCTION</scope>
</reference>
<reference key="42">
    <citation type="journal article" date="2011" name="J. Mol. Biol.">
        <title>Light-induced conformational changes in full-length Arabidopsis thaliana cryptochrome.</title>
        <authorList>
            <person name="Kondoh M."/>
            <person name="Shiraishi C."/>
            <person name="Mueller P."/>
            <person name="Ahmad M."/>
            <person name="Hitomi K."/>
            <person name="Getzoff E.D."/>
            <person name="Terazima M."/>
        </authorList>
    </citation>
    <scope>FUNCTION</scope>
    <scope>MUTAGENESIS OF TRP-324</scope>
</reference>
<reference key="43">
    <citation type="journal article" date="2011" name="Plant J.">
        <title>Light receptor action is critical for maintaining plant biomass at warm ambient temperatures.</title>
        <authorList>
            <person name="Foreman J."/>
            <person name="Johansson H."/>
            <person name="Hornitschek P."/>
            <person name="Josse E.-M."/>
            <person name="Fankhauser C."/>
            <person name="Halliday K.J."/>
        </authorList>
    </citation>
    <scope>FUNCTION</scope>
    <scope>DISRUPTION PHENOTYPE</scope>
</reference>
<reference key="44">
    <citation type="journal article" date="2011" name="Plant J.">
        <title>Cryptochrome 1 and phytochrome B control shade-avoidance responses in Arabidopsis via partially independent hormonal cascades.</title>
        <authorList>
            <person name="Keller M.M."/>
            <person name="Jaillais Y."/>
            <person name="Pedmale U.V."/>
            <person name="Moreno J.E."/>
            <person name="Chory J."/>
            <person name="Ballare C.L."/>
        </authorList>
    </citation>
    <scope>FUNCTION</scope>
    <scope>DISRUPTION PHENOTYPE</scope>
</reference>
<reference key="45">
    <citation type="journal article" date="2012" name="Angew. Chem. Int. Ed.">
        <title>Single amino acid substitution reveals latent photolyase activity in Arabidopsis cry1.</title>
        <authorList>
            <person name="Burney S."/>
            <person name="Wenzel R."/>
            <person name="Kottke T."/>
            <person name="Roussel T."/>
            <person name="Hoang N."/>
            <person name="Bouly J.P."/>
            <person name="Bittl R."/>
            <person name="Heberle J."/>
            <person name="Ahmad M."/>
        </authorList>
    </citation>
    <scope>MUTAGENESIS OF ASP-396</scope>
</reference>
<reference key="46">
    <citation type="journal article" date="2012" name="J. Biol. Chem.">
        <title>Light-dependent, dark-promoted interaction between Arabidopsis cryptochrome 1 and phytochrome B proteins.</title>
        <authorList>
            <person name="Hughes R.M."/>
            <person name="Vrana J.D."/>
            <person name="Song J."/>
            <person name="Tucker C.L."/>
        </authorList>
    </citation>
    <scope>INTERACTION WITH PHYB</scope>
    <scope>MUTAGENESIS OF LEU-407</scope>
</reference>
<reference key="47">
    <citation type="journal article" date="2012" name="Mol. Plant">
        <title>Substitution of a conserved glycine in the PHR domain of Arabidopsis cryptochrome 1 confers a constitutive light response.</title>
        <authorList>
            <person name="Gu N.-N."/>
            <person name="Zhang Y.-C."/>
            <person name="Yang H.-Q."/>
        </authorList>
    </citation>
    <scope>MUTAGENESIS OF GLY-380</scope>
    <scope>SUBCELLULAR LOCATION</scope>
</reference>
<reference key="48">
    <citation type="journal article" date="2012" name="Plant Cell">
        <title>The CRYPTOCHROME1-dependent response to excess light is mediated through the transcriptional activators ZINC FINGER PROTEIN EXPRESSED IN INFLORESCENCE MERISTEM LIKE1 and ZML2 in Arabidopsis.</title>
        <authorList>
            <person name="Shaikhali J."/>
            <person name="de Dios Barajas-Lopez J."/>
            <person name="Oetvoes K."/>
            <person name="Kremnev D."/>
            <person name="Garcia A.S."/>
            <person name="Srivastava V."/>
            <person name="Wingsle G."/>
            <person name="Bako L."/>
            <person name="Strand A."/>
        </authorList>
    </citation>
    <scope>FUNCTION</scope>
    <scope>DISRUPTION PHENOTYPE</scope>
</reference>
<reference key="49">
    <citation type="journal article" date="2012" name="Plant Mol. Biol.">
        <title>cry1 and GPA1 signaling genetically interact in hook opening and anthocyanin synthesis in Arabidopsis.</title>
        <authorList>
            <person name="Fox A.R."/>
            <person name="Soto G.C."/>
            <person name="Jones A.M."/>
            <person name="Casal J.J."/>
            <person name="Muschietti J.P."/>
            <person name="Mazzella M.A."/>
        </authorList>
    </citation>
    <scope>FUNCTION</scope>
    <scope>DISRUPTION PHENOTYPE</scope>
    <source>
        <strain>cv. Columbia</strain>
        <strain>cv. Landsberg erecta</strain>
    </source>
</reference>
<reference key="50">
    <citation type="journal article" date="2012" name="Plant Physiol.">
        <title>Phototropins but not cryptochromes mediate the blue light-specific promotion of stomatal conductance, while both enhance photosynthesis and transpiration under full sunlight.</title>
        <authorList>
            <person name="Boccalandro H.E."/>
            <person name="Giordano C.V."/>
            <person name="Ploschuk E.L."/>
            <person name="Piccoli P.N."/>
            <person name="Bottini R."/>
            <person name="Casal J.J."/>
        </authorList>
    </citation>
    <scope>FUNCTION</scope>
    <scope>DISRUPTION PHENOTYPE</scope>
    <source>
        <strain>cv. Columbia</strain>
    </source>
</reference>
<reference key="51">
    <citation type="journal article" date="2012" name="Proc. Natl. Acad. Sci. U.S.A.">
        <title>Magnetically sensitive light-induced reactions in cryptochrome are consistent with its proposed role as a magnetoreceptor.</title>
        <authorList>
            <person name="Maeda K."/>
            <person name="Robinson A.J."/>
            <person name="Henbest K.B."/>
            <person name="Hogben H.J."/>
            <person name="Biskup T."/>
            <person name="Ahmad M."/>
            <person name="Schleicher E."/>
            <person name="Weber S."/>
            <person name="Timmel C.R."/>
            <person name="Hore P.J."/>
        </authorList>
    </citation>
    <scope>FUNCTION</scope>
</reference>
<reference key="52">
    <citation type="journal article" date="2013" name="Mol. Syst. Biol.">
        <title>Network balance via CRY signalling controls the Arabidopsis circadian clock over ambient temperatures.</title>
        <authorList>
            <person name="Gould P.D."/>
            <person name="Ugarte N."/>
            <person name="Domijan M."/>
            <person name="Costa M."/>
            <person name="Foreman J."/>
            <person name="Macgregor D."/>
            <person name="Rose K."/>
            <person name="Griffiths J."/>
            <person name="Millar A.J."/>
            <person name="Finkenstaedt B."/>
            <person name="Penfield S."/>
            <person name="Rand D.A."/>
            <person name="Halliday K.J."/>
            <person name="Hall A.J.W."/>
        </authorList>
    </citation>
    <scope>FUNCTION</scope>
    <scope>DISRUPTION PHENOTYPE</scope>
    <scope>INDUCTION BY TEMPERATURE</scope>
    <source>
        <strain>cv. Columbia</strain>
    </source>
</reference>
<reference key="53">
    <citation type="journal article" date="2013" name="Plant Cell Environ.">
        <title>The shoot regeneration capacity of excised Arabidopsis cotyledons is established during the initial hours after injury and is modulated by a complex genetic network of light signalling.</title>
        <authorList>
            <person name="Nameth B."/>
            <person name="Dinka S.J."/>
            <person name="Chatfield S.P."/>
            <person name="Morris A."/>
            <person name="English J."/>
            <person name="Lewis D."/>
            <person name="Oro R."/>
            <person name="Raizada M.N."/>
        </authorList>
    </citation>
    <scope>FUNCTION</scope>
    <scope>DISRUPTION PHENOTYPE</scope>
    <source>
        <strain>cv. Landsberg erecta</strain>
    </source>
</reference>
<reference key="54">
    <citation type="journal article" date="2013" name="Plant J.">
        <title>Lifetimes of Arabidopsis cryptochrome signaling states in vivo.</title>
        <authorList>
            <person name="Herbel V."/>
            <person name="Orth C."/>
            <person name="Wenzel R."/>
            <person name="Ahmad M."/>
            <person name="Bittl R."/>
            <person name="Batschauer A."/>
        </authorList>
    </citation>
    <scope>FUNCTION</scope>
    <source>
        <strain>cv. Landsberg erecta</strain>
    </source>
</reference>
<reference key="55">
    <citation type="journal article" date="2014" name="J. Am. Chem. Soc.">
        <title>ATP binding and aspartate protonation enhance photoinduced electron transfer in plant cryptochrome.</title>
        <authorList>
            <person name="Cailliez F."/>
            <person name="Mueller P."/>
            <person name="Gallois M."/>
            <person name="de la Lande A."/>
        </authorList>
    </citation>
    <scope>FUNCTION</scope>
</reference>
<reference key="56">
    <citation type="journal article" date="2014" name="Mol. Plant">
        <title>Strigolactone-regulated hypocotyl elongation is dependent on cryptochrome and phytochrome signaling pathways in Arabidopsis.</title>
        <authorList>
            <person name="Jia K.-P."/>
            <person name="Luo Q."/>
            <person name="He S.-B."/>
            <person name="Lu X.-D."/>
            <person name="Yang H.-Q."/>
        </authorList>
    </citation>
    <scope>FUNCTION</scope>
    <scope>DISRUPTION PHENOTYPE</scope>
    <source>
        <strain>cv. Columbia</strain>
    </source>
</reference>
<reference key="57">
    <citation type="journal article" date="2015" name="Bioelectromagnetics">
        <title>Suppression of Arabidopsis flowering by near-null magnetic field is affected by light.</title>
        <authorList>
            <person name="Xu C."/>
            <person name="Li Y."/>
            <person name="Yu Y."/>
            <person name="Zhang Y."/>
            <person name="Wei S."/>
        </authorList>
    </citation>
    <scope>FUNCTION</scope>
    <scope>DISRUPTION PHENOTYPE</scope>
</reference>
<reference key="58">
    <citation type="journal article" date="2015" name="J. Exp. Bot.">
        <title>TCP2 positively regulates HY5/HYH and photomorphogenesis in Arabidopsis.</title>
        <authorList>
            <person name="He Z."/>
            <person name="Zhao X."/>
            <person name="Kong F."/>
            <person name="Zuo Z."/>
            <person name="Liu X."/>
        </authorList>
    </citation>
    <scope>INTERACTION WITH TCP2</scope>
</reference>
<reference key="59">
    <citation type="journal article" date="2015" name="Mol. Plant">
        <title>The CNT1 domain of Arabidopsis CRY1 Alone is sufficient to mediate blue light inhibition of hypocotyl elongation.</title>
        <authorList>
            <person name="He S.B."/>
            <person name="Wang W.X."/>
            <person name="Zhang J.Y."/>
            <person name="Xu F."/>
            <person name="Lian H.L."/>
            <person name="Li L."/>
            <person name="Yang H.Q."/>
        </authorList>
    </citation>
    <scope>FUNCTION</scope>
    <scope>DISRUPTION PHENOTYPE</scope>
    <scope>MUTAGENESIS OF SER-66; GLY-220; GLY-283; GLY-337; GLY-340; GLY-347 AND ALA-462</scope>
    <scope>DOMAINS</scope>
</reference>
<reference key="60">
    <citation type="journal article" date="2015" name="New Phytol.">
        <title>Blue-light dependent reactive oxygen species formation by Arabidopsis cryptochrome may define a novel evolutionarily conserved signaling mechanism.</title>
        <authorList>
            <person name="Consentino L."/>
            <person name="Lambert S."/>
            <person name="Martino C."/>
            <person name="Jourdan N."/>
            <person name="Bouchet P.-E."/>
            <person name="Witczak J."/>
            <person name="Castello P."/>
            <person name="El-Esawi M."/>
            <person name="Corbineau F."/>
            <person name="d'Harlingue A."/>
            <person name="Ahmad M."/>
        </authorList>
    </citation>
    <scope>FUNCTION</scope>
    <scope>DISRUPTION PHENOTYPE</scope>
    <source>
        <strain>cv. Wassilewskija</strain>
    </source>
</reference>
<reference key="61">
    <citation type="journal article" date="2015" name="Plant Signal. Behav.">
        <title>Cellular metabolites modulate in vivo signaling of Arabidopsis cryptochrome-1.</title>
        <authorList>
            <person name="El-Esawi M."/>
            <person name="Glascoe A."/>
            <person name="Engle D."/>
            <person name="Ritz T."/>
            <person name="Link J."/>
            <person name="Ahmad M."/>
        </authorList>
    </citation>
    <scope>FUNCTION</scope>
    <scope>MUTAGENESIS OF TRP-324 AND TRP-400</scope>
</reference>
<reference key="62">
    <citation type="journal article" date="2016" name="Cell">
        <title>Cryptochromes interact directly with PIFs to control plant growth in limiting blue light.</title>
        <authorList>
            <person name="Pedmale U.V."/>
            <person name="Huang S.S."/>
            <person name="Zander M."/>
            <person name="Cole B.J."/>
            <person name="Hetzel J."/>
            <person name="Ljung K."/>
            <person name="Reis P.A."/>
            <person name="Sridevi P."/>
            <person name="Nito K."/>
            <person name="Nery J.R."/>
            <person name="Ecker J.R."/>
            <person name="Chory J."/>
        </authorList>
    </citation>
    <scope>FUNCTION</scope>
    <scope>INDUCTION BY LOW BLUE LIGHT</scope>
    <scope>INTERACTION WITH PIF4 AND PIF5</scope>
    <scope>SUBCELLULAR LOCATION</scope>
</reference>
<reference key="63">
    <citation type="journal article" date="2019" name="Nat. Commun.">
        <title>Daytime temperature is sensed by phytochrome B in Arabidopsis through a transcriptional activator HEMERA.</title>
        <authorList>
            <person name="Qiu Y."/>
            <person name="Li M."/>
            <person name="Kim R.J.-A."/>
            <person name="Moore C.M."/>
            <person name="Chen M."/>
        </authorList>
    </citation>
    <scope>FUNCTION</scope>
    <scope>DISRUPTION PHENOTYPE</scope>
    <source>
        <strain>cv. Columbia</strain>
    </source>
</reference>
<reference key="64">
    <citation type="journal article" date="2004" name="Proc. Natl. Acad. Sci. U.S.A.">
        <title>Structure of the photolyase-like domain of cryptochrome 1 from Arabidopsis thaliana.</title>
        <authorList>
            <person name="Brautigam C.A."/>
            <person name="Smith B.S."/>
            <person name="Ma Z."/>
            <person name="Palnitkar M."/>
            <person name="Tomchick D.R."/>
            <person name="Machius M."/>
            <person name="Deisenhofer J."/>
        </authorList>
    </citation>
    <scope>X-RAY CRYSTALLOGRAPHY (2.45 ANGSTROMS) OF 1-509 IN COMPLEX WITH ATP; FAD AND MAGNESIUM</scope>
    <scope>DISULFIDE BONDS</scope>
    <scope>BINDING SITES</scope>
</reference>
<dbReference type="EMBL" id="S66907">
    <property type="protein sequence ID" value="AAB28724.1"/>
    <property type="molecule type" value="mRNA"/>
</dbReference>
<dbReference type="EMBL" id="S66909">
    <property type="protein sequence ID" value="AAB28725.2"/>
    <property type="status" value="ALT_FRAME"/>
    <property type="molecule type" value="mRNA"/>
</dbReference>
<dbReference type="EMBL" id="AF128396">
    <property type="protein sequence ID" value="AAD17364.1"/>
    <property type="status" value="ALT_SEQ"/>
    <property type="molecule type" value="Genomic_DNA"/>
</dbReference>
<dbReference type="EMBL" id="AL161513">
    <property type="protein sequence ID" value="CAB78016.1"/>
    <property type="status" value="ALT_SEQ"/>
    <property type="molecule type" value="Genomic_DNA"/>
</dbReference>
<dbReference type="EMBL" id="CP002687">
    <property type="protein sequence ID" value="AEE82696.1"/>
    <property type="molecule type" value="Genomic_DNA"/>
</dbReference>
<dbReference type="EMBL" id="AF361588">
    <property type="protein sequence ID" value="AAK32756.1"/>
    <property type="molecule type" value="mRNA"/>
</dbReference>
<dbReference type="EMBL" id="AY124863">
    <property type="protein sequence ID" value="AAM70572.1"/>
    <property type="molecule type" value="mRNA"/>
</dbReference>
<dbReference type="PIR" id="H85089">
    <property type="entry name" value="H85089"/>
</dbReference>
<dbReference type="PIR" id="S39058">
    <property type="entry name" value="S39058"/>
</dbReference>
<dbReference type="RefSeq" id="NP_567341.1">
    <property type="nucleotide sequence ID" value="NM_116961.5"/>
</dbReference>
<dbReference type="PDB" id="1U3C">
    <property type="method" value="X-ray"/>
    <property type="resolution" value="2.60 A"/>
    <property type="chains" value="A=1-509"/>
</dbReference>
<dbReference type="PDB" id="1U3D">
    <property type="method" value="X-ray"/>
    <property type="resolution" value="2.45 A"/>
    <property type="chains" value="A=1-509"/>
</dbReference>
<dbReference type="PDB" id="6QTW">
    <property type="method" value="X-ray"/>
    <property type="resolution" value="1.39 A"/>
    <property type="chains" value="B=544-553"/>
</dbReference>
<dbReference type="PDBsum" id="1U3C"/>
<dbReference type="PDBsum" id="1U3D"/>
<dbReference type="PDBsum" id="6QTW"/>
<dbReference type="SMR" id="Q43125"/>
<dbReference type="BioGRID" id="11769">
    <property type="interactions" value="14"/>
</dbReference>
<dbReference type="FunCoup" id="Q43125">
    <property type="interactions" value="569"/>
</dbReference>
<dbReference type="IntAct" id="Q43125">
    <property type="interactions" value="3"/>
</dbReference>
<dbReference type="MINT" id="Q43125"/>
<dbReference type="STRING" id="3702.Q43125"/>
<dbReference type="iPTMnet" id="Q43125"/>
<dbReference type="PaxDb" id="3702-AT4G08920.1"/>
<dbReference type="ProteomicsDB" id="224510"/>
<dbReference type="EnsemblPlants" id="AT4G08920.1">
    <property type="protein sequence ID" value="AT4G08920.1"/>
    <property type="gene ID" value="AT4G08920"/>
</dbReference>
<dbReference type="GeneID" id="826470"/>
<dbReference type="Gramene" id="AT4G08920.1">
    <property type="protein sequence ID" value="AT4G08920.1"/>
    <property type="gene ID" value="AT4G08920"/>
</dbReference>
<dbReference type="KEGG" id="ath:AT4G08920"/>
<dbReference type="Araport" id="AT4G08920"/>
<dbReference type="TAIR" id="AT4G08920">
    <property type="gene designation" value="CRY1"/>
</dbReference>
<dbReference type="eggNOG" id="KOG0133">
    <property type="taxonomic scope" value="Eukaryota"/>
</dbReference>
<dbReference type="HOGENOM" id="CLU_010348_5_0_1"/>
<dbReference type="InParanoid" id="Q43125"/>
<dbReference type="OMA" id="KYFPWVV"/>
<dbReference type="EvolutionaryTrace" id="Q43125"/>
<dbReference type="PRO" id="PR:Q43125"/>
<dbReference type="Proteomes" id="UP000006548">
    <property type="component" value="Chromosome 4"/>
</dbReference>
<dbReference type="ExpressionAtlas" id="Q43125">
    <property type="expression patterns" value="baseline and differential"/>
</dbReference>
<dbReference type="GO" id="GO:0005737">
    <property type="term" value="C:cytoplasm"/>
    <property type="evidence" value="ECO:0000314"/>
    <property type="project" value="TAIR"/>
</dbReference>
<dbReference type="GO" id="GO:0005829">
    <property type="term" value="C:cytosol"/>
    <property type="evidence" value="ECO:0007005"/>
    <property type="project" value="TAIR"/>
</dbReference>
<dbReference type="GO" id="GO:0016604">
    <property type="term" value="C:nuclear body"/>
    <property type="evidence" value="ECO:0000314"/>
    <property type="project" value="UniProtKB"/>
</dbReference>
<dbReference type="GO" id="GO:0005634">
    <property type="term" value="C:nucleus"/>
    <property type="evidence" value="ECO:0000314"/>
    <property type="project" value="UniProtKB"/>
</dbReference>
<dbReference type="GO" id="GO:0005524">
    <property type="term" value="F:ATP binding"/>
    <property type="evidence" value="ECO:0000314"/>
    <property type="project" value="UniProtKB"/>
</dbReference>
<dbReference type="GO" id="GO:0009882">
    <property type="term" value="F:blue light photoreceptor activity"/>
    <property type="evidence" value="ECO:0000314"/>
    <property type="project" value="TAIR"/>
</dbReference>
<dbReference type="GO" id="GO:0071949">
    <property type="term" value="F:FAD binding"/>
    <property type="evidence" value="ECO:0000314"/>
    <property type="project" value="UniProtKB"/>
</dbReference>
<dbReference type="GO" id="GO:0042802">
    <property type="term" value="F:identical protein binding"/>
    <property type="evidence" value="ECO:0000353"/>
    <property type="project" value="IntAct"/>
</dbReference>
<dbReference type="GO" id="GO:0016301">
    <property type="term" value="F:kinase activity"/>
    <property type="evidence" value="ECO:0000314"/>
    <property type="project" value="UniProtKB"/>
</dbReference>
<dbReference type="GO" id="GO:0046872">
    <property type="term" value="F:metal ion binding"/>
    <property type="evidence" value="ECO:0007669"/>
    <property type="project" value="UniProtKB-KW"/>
</dbReference>
<dbReference type="GO" id="GO:0042803">
    <property type="term" value="F:protein homodimerization activity"/>
    <property type="evidence" value="ECO:0000353"/>
    <property type="project" value="TAIR"/>
</dbReference>
<dbReference type="GO" id="GO:0004672">
    <property type="term" value="F:protein kinase activity"/>
    <property type="evidence" value="ECO:0000314"/>
    <property type="project" value="TAIR"/>
</dbReference>
<dbReference type="GO" id="GO:0046283">
    <property type="term" value="P:anthocyanin-containing compound metabolic process"/>
    <property type="evidence" value="ECO:0000315"/>
    <property type="project" value="UniProtKB"/>
</dbReference>
<dbReference type="GO" id="GO:0060918">
    <property type="term" value="P:auxin transport"/>
    <property type="evidence" value="ECO:0000315"/>
    <property type="project" value="UniProtKB"/>
</dbReference>
<dbReference type="GO" id="GO:0009785">
    <property type="term" value="P:blue light signaling pathway"/>
    <property type="evidence" value="ECO:0000304"/>
    <property type="project" value="TAIR"/>
</dbReference>
<dbReference type="GO" id="GO:0010617">
    <property type="term" value="P:circadian regulation of calcium ion oscillation"/>
    <property type="evidence" value="ECO:0000315"/>
    <property type="project" value="TAIR"/>
</dbReference>
<dbReference type="GO" id="GO:0007623">
    <property type="term" value="P:circadian rhythm"/>
    <property type="evidence" value="ECO:0000270"/>
    <property type="project" value="UniProtKB"/>
</dbReference>
<dbReference type="GO" id="GO:0006952">
    <property type="term" value="P:defense response"/>
    <property type="evidence" value="ECO:0007669"/>
    <property type="project" value="UniProtKB-KW"/>
</dbReference>
<dbReference type="GO" id="GO:0009583">
    <property type="term" value="P:detection of light stimulus"/>
    <property type="evidence" value="ECO:0000315"/>
    <property type="project" value="TAIR"/>
</dbReference>
<dbReference type="GO" id="GO:0072387">
    <property type="term" value="P:flavin adenine dinucleotide metabolic process"/>
    <property type="evidence" value="ECO:0000314"/>
    <property type="project" value="UniProtKB"/>
</dbReference>
<dbReference type="GO" id="GO:1901332">
    <property type="term" value="P:negative regulation of lateral root development"/>
    <property type="evidence" value="ECO:0000315"/>
    <property type="project" value="UniProtKB"/>
</dbReference>
<dbReference type="GO" id="GO:0009640">
    <property type="term" value="P:photomorphogenesis"/>
    <property type="evidence" value="ECO:0000315"/>
    <property type="project" value="TAIR"/>
</dbReference>
<dbReference type="GO" id="GO:0010117">
    <property type="term" value="P:photoprotection"/>
    <property type="evidence" value="ECO:0000315"/>
    <property type="project" value="UniProtKB"/>
</dbReference>
<dbReference type="GO" id="GO:0009638">
    <property type="term" value="P:phototropism"/>
    <property type="evidence" value="ECO:0000315"/>
    <property type="project" value="UniProtKB"/>
</dbReference>
<dbReference type="GO" id="GO:0099402">
    <property type="term" value="P:plant organ development"/>
    <property type="evidence" value="ECO:0000315"/>
    <property type="project" value="UniProtKB"/>
</dbReference>
<dbReference type="GO" id="GO:1901529">
    <property type="term" value="P:positive regulation of anion channel activity"/>
    <property type="evidence" value="ECO:0000315"/>
    <property type="project" value="UniProtKB"/>
</dbReference>
<dbReference type="GO" id="GO:1900426">
    <property type="term" value="P:positive regulation of defense response to bacterium"/>
    <property type="evidence" value="ECO:0000315"/>
    <property type="project" value="UniProtKB"/>
</dbReference>
<dbReference type="GO" id="GO:1902448">
    <property type="term" value="P:positive regulation of shade avoidance"/>
    <property type="evidence" value="ECO:0000315"/>
    <property type="project" value="UniProtKB"/>
</dbReference>
<dbReference type="GO" id="GO:1901672">
    <property type="term" value="P:positive regulation of systemic acquired resistance"/>
    <property type="evidence" value="ECO:0000315"/>
    <property type="project" value="UniProtKB"/>
</dbReference>
<dbReference type="GO" id="GO:0046777">
    <property type="term" value="P:protein autophosphorylation"/>
    <property type="evidence" value="ECO:0000314"/>
    <property type="project" value="UniProtKB"/>
</dbReference>
<dbReference type="GO" id="GO:0042752">
    <property type="term" value="P:regulation of circadian rhythm"/>
    <property type="evidence" value="ECO:0000315"/>
    <property type="project" value="UniProtKB"/>
</dbReference>
<dbReference type="GO" id="GO:0010468">
    <property type="term" value="P:regulation of gene expression"/>
    <property type="evidence" value="ECO:0000315"/>
    <property type="project" value="TAIR"/>
</dbReference>
<dbReference type="GO" id="GO:0010310">
    <property type="term" value="P:regulation of hydrogen peroxide metabolic process"/>
    <property type="evidence" value="ECO:0000314"/>
    <property type="project" value="UniProtKB"/>
</dbReference>
<dbReference type="GO" id="GO:1901371">
    <property type="term" value="P:regulation of leaf morphogenesis"/>
    <property type="evidence" value="ECO:0000315"/>
    <property type="project" value="UniProtKB"/>
</dbReference>
<dbReference type="GO" id="GO:0010075">
    <property type="term" value="P:regulation of meristem growth"/>
    <property type="evidence" value="ECO:0000316"/>
    <property type="project" value="TAIR"/>
</dbReference>
<dbReference type="GO" id="GO:2000377">
    <property type="term" value="P:regulation of reactive oxygen species metabolic process"/>
    <property type="evidence" value="ECO:0000314"/>
    <property type="project" value="UniProtKB"/>
</dbReference>
<dbReference type="GO" id="GO:2000652">
    <property type="term" value="P:regulation of secondary cell wall biogenesis"/>
    <property type="evidence" value="ECO:0000314"/>
    <property type="project" value="TAIR"/>
</dbReference>
<dbReference type="GO" id="GO:0051510">
    <property type="term" value="P:regulation of unidimensional cell growth"/>
    <property type="evidence" value="ECO:0000315"/>
    <property type="project" value="TAIR"/>
</dbReference>
<dbReference type="GO" id="GO:0009646">
    <property type="term" value="P:response to absence of light"/>
    <property type="evidence" value="ECO:0000315"/>
    <property type="project" value="UniProtKB"/>
</dbReference>
<dbReference type="GO" id="GO:0009637">
    <property type="term" value="P:response to blue light"/>
    <property type="evidence" value="ECO:0000314"/>
    <property type="project" value="UniProtKB"/>
</dbReference>
<dbReference type="GO" id="GO:0010218">
    <property type="term" value="P:response to far red light"/>
    <property type="evidence" value="ECO:0000315"/>
    <property type="project" value="UniProtKB"/>
</dbReference>
<dbReference type="GO" id="GO:0009644">
    <property type="term" value="P:response to high light intensity"/>
    <property type="evidence" value="ECO:0000315"/>
    <property type="project" value="UniProtKB"/>
</dbReference>
<dbReference type="GO" id="GO:0009416">
    <property type="term" value="P:response to light stimulus"/>
    <property type="evidence" value="ECO:0000314"/>
    <property type="project" value="UniProtKB"/>
</dbReference>
<dbReference type="GO" id="GO:0010244">
    <property type="term" value="P:response to low fluence blue light stimulus by blue low-fluence system"/>
    <property type="evidence" value="ECO:0000315"/>
    <property type="project" value="UniProtKB"/>
</dbReference>
<dbReference type="GO" id="GO:0071000">
    <property type="term" value="P:response to magnetism"/>
    <property type="evidence" value="ECO:0000314"/>
    <property type="project" value="UniProtKB"/>
</dbReference>
<dbReference type="GO" id="GO:0010114">
    <property type="term" value="P:response to red light"/>
    <property type="evidence" value="ECO:0000315"/>
    <property type="project" value="UniProtKB"/>
</dbReference>
<dbReference type="GO" id="GO:1902347">
    <property type="term" value="P:response to strigolactone"/>
    <property type="evidence" value="ECO:0000315"/>
    <property type="project" value="UniProtKB"/>
</dbReference>
<dbReference type="GO" id="GO:0009266">
    <property type="term" value="P:response to temperature stimulus"/>
    <property type="evidence" value="ECO:0000315"/>
    <property type="project" value="UniProtKB"/>
</dbReference>
<dbReference type="GO" id="GO:0009414">
    <property type="term" value="P:response to water deprivation"/>
    <property type="evidence" value="ECO:0000316"/>
    <property type="project" value="TAIR"/>
</dbReference>
<dbReference type="GO" id="GO:0010343">
    <property type="term" value="P:singlet oxygen-mediated programmed cell death"/>
    <property type="evidence" value="ECO:0000315"/>
    <property type="project" value="TAIR"/>
</dbReference>
<dbReference type="GO" id="GO:0010118">
    <property type="term" value="P:stomatal movement"/>
    <property type="evidence" value="ECO:0000315"/>
    <property type="project" value="UniProtKB"/>
</dbReference>
<dbReference type="DisProt" id="DP00474"/>
<dbReference type="FunFam" id="3.40.50.620:FF:000193">
    <property type="entry name" value="Cryptochrome 1"/>
    <property type="match status" value="1"/>
</dbReference>
<dbReference type="FunFam" id="1.10.579.10:FF:000003">
    <property type="entry name" value="Deoxyribodipyrimidine photo-lyase"/>
    <property type="match status" value="1"/>
</dbReference>
<dbReference type="Gene3D" id="1.25.40.80">
    <property type="match status" value="1"/>
</dbReference>
<dbReference type="Gene3D" id="1.10.579.10">
    <property type="entry name" value="DNA Cyclobutane Dipyrimidine Photolyase, subunit A, domain 3"/>
    <property type="match status" value="1"/>
</dbReference>
<dbReference type="Gene3D" id="3.40.50.620">
    <property type="entry name" value="HUPs"/>
    <property type="match status" value="1"/>
</dbReference>
<dbReference type="InterPro" id="IPR036134">
    <property type="entry name" value="Crypto/Photolyase_FAD-like_sf"/>
</dbReference>
<dbReference type="InterPro" id="IPR036155">
    <property type="entry name" value="Crypto/Photolyase_N_sf"/>
</dbReference>
<dbReference type="InterPro" id="IPR005101">
    <property type="entry name" value="Cryptochr/Photolyase_FAD-bd"/>
</dbReference>
<dbReference type="InterPro" id="IPR002081">
    <property type="entry name" value="Cryptochrome/DNA_photolyase_1"/>
</dbReference>
<dbReference type="InterPro" id="IPR020978">
    <property type="entry name" value="Cryptochrome_C"/>
</dbReference>
<dbReference type="InterPro" id="IPR014134">
    <property type="entry name" value="Cryptochrome_pln"/>
</dbReference>
<dbReference type="InterPro" id="IPR018394">
    <property type="entry name" value="DNA_photolyase_1_CS_C"/>
</dbReference>
<dbReference type="InterPro" id="IPR006050">
    <property type="entry name" value="DNA_photolyase_N"/>
</dbReference>
<dbReference type="InterPro" id="IPR014729">
    <property type="entry name" value="Rossmann-like_a/b/a_fold"/>
</dbReference>
<dbReference type="NCBIfam" id="TIGR02766">
    <property type="entry name" value="crypt_chrom_pln"/>
    <property type="match status" value="1"/>
</dbReference>
<dbReference type="PANTHER" id="PTHR11455">
    <property type="entry name" value="CRYPTOCHROME"/>
    <property type="match status" value="1"/>
</dbReference>
<dbReference type="PANTHER" id="PTHR11455:SF50">
    <property type="entry name" value="CRYPTOCHROME-1"/>
    <property type="match status" value="1"/>
</dbReference>
<dbReference type="Pfam" id="PF12546">
    <property type="entry name" value="Cryptochrome_C"/>
    <property type="match status" value="1"/>
</dbReference>
<dbReference type="Pfam" id="PF00875">
    <property type="entry name" value="DNA_photolyase"/>
    <property type="match status" value="1"/>
</dbReference>
<dbReference type="Pfam" id="PF03441">
    <property type="entry name" value="FAD_binding_7"/>
    <property type="match status" value="1"/>
</dbReference>
<dbReference type="PRINTS" id="PR00147">
    <property type="entry name" value="DNAPHOTLYASE"/>
</dbReference>
<dbReference type="SUPFAM" id="SSF48173">
    <property type="entry name" value="Cryptochrome/photolyase FAD-binding domain"/>
    <property type="match status" value="1"/>
</dbReference>
<dbReference type="SUPFAM" id="SSF52425">
    <property type="entry name" value="Cryptochrome/photolyase, N-terminal domain"/>
    <property type="match status" value="1"/>
</dbReference>
<dbReference type="PROSITE" id="PS00394">
    <property type="entry name" value="DNA_PHOTOLYASES_1_1"/>
    <property type="match status" value="1"/>
</dbReference>
<dbReference type="PROSITE" id="PS00691">
    <property type="entry name" value="DNA_PHOTOLYASES_1_2"/>
    <property type="match status" value="1"/>
</dbReference>
<dbReference type="PROSITE" id="PS51645">
    <property type="entry name" value="PHR_CRY_ALPHA_BETA"/>
    <property type="match status" value="1"/>
</dbReference>
<comment type="function">
    <text evidence="9 11 17 18 20 23 25 27 28 30 31 32 33 34 36 37 38 40 41 42 44 45 46 47 48 49 50 51 53 54 55 56 58 60 61 63">Photoreceptor that mediates primarily blue light inhibition of hypocotyl elongation and photoperiodic control of floral initiation, and regulates other light responses, including circadian rhythms, tropic growth, stomata opening, guard cell development, root development, bacterial and viral pathogen responses, abiotic stress responses, cell cycles, programmed cell death, apical dominance, fruit and ovule development, seed dormancy, and magnetoreception. Photoexcited cryptochromes interact with signaling partner proteins to alter gene expression at both transcriptional and post-translational levels and, consequently, regulate the corresponding metabolic and developmental programs (PubMed:21841916). Blue-light absorbing flavoprotein that activates reversible flavin photoreduction via an electron transport chain comprising a tryptophan triad (W-324, W-377 and W-400), accompanied by a large conformational change upon photoexcitation, or via an alternative electron transport that involves small metabolites, including NADPH, NADH, and ATP. The half-life of the activated signaling state is about 5 minutes (PubMed:21467031, PubMed:21875594, PubMed:23398192, PubMed:25157750, PubMed:26313597). Also involved in the detection of blue/green ratio in light (shade under leaf canopies) and subsequent adaptations on plant growth and development (PubMed:20668058). In darkness, the dark reoxidation of flavin occurs and leads to inactivated state (PubMed:21467031, PubMed:23398192). Perceives low blue light (LBL) and responds by directly contacting two bHLH transcription factors, PIF4 and PIF5, at chromatin on E-box variant 5'-CA[CT]GTG-3' to promote their activity and stimulate specific gene expression to adapt global physiology (e.g. hypocotyl elongation and hyponastic growth in low blue light) (PubMed:19558423, PubMed:26724867). When activated by high-intensity blue light, catalyzes direct enzymatic conversion of molecular oxygen O(2) to reactive oxygen species (ROS) and hydrogen peroxide H(2)O(2) in vitro. ROS accumulation upon activation by blue light leads to cell death in protoplasts (PubMed:25728686). Seems essential for blue-light-triggered and singlet oxygen-mediated programmed cell death (PCD) (PubMed:17075038). Required for the induction of nuclear genes encoding photoprotective components by GATA24 and GATA28 in extreme light intensities that exceed the electron utilization capacity of the chloroplast (PubMed:22786870). Involved in shortening the circadian clock period, especially at 27 degrees Celsius, in blue light (BL) and required to maintain clock genes expression rhythm (PubMed:23511208). Mediates blue light-induced gene expression and hypocotyl elongation through the inhibition of COP1-mediated degradation of the transcription factors BIT1 and HY5 and via the activation of anion channels at the plasma membrane, probably via auxin signaling (PubMed:12324610, PubMed:16093319, PubMed:18397371, PubMed:21511871, PubMed:21511872, PubMed:25721730, PubMed:8528277, PubMed:9765547). Required for the hypocotyl hook formation in darkness (PubMed:22855128). Involved in blue light-dependent stomatal opening, CHS gene expression, transpiration, inhibition of stem growth and increase of root growth, probably by regulating abscisic acid (ABA) (PubMed:16093319, PubMed:16703358, PubMed:22147516, PubMed:7756321, PubMed:9565033). Prevents lateral roots growth by inhibiting auxin transport (PubMed:20133010). Necessary for shade avoidance syndrome (SAS), characterized by leaf hyponasty and reduced lamina/petiole ratio, when exposed to blue light attenuation (PubMed:21457375). Together with phototropins, involved in phototropism regulation by various blue light fluence; blue light attenuates phototropism in high fluence rates (100 umol.m-2.s-1) but enhances phototropism in low fluence rates (&lt;1.0 umol.m-2.s-1) (PubMed:12857830). Required for blue/UV-A wavelengths-mediated inhibition of explants shoot regeneration in vitro (e.g. new shoot apical meristems regeneration from excised cotyledons) (PubMed:22681544). Modulates anthocyanin accumulation in a PHYA-dependent manner in far-red-light. Acts as a PHYA/PHYB-dependent modulator of chlorophyll accumulation in red light. Contributes to most blue light deetiolation responses (PubMed:8528277, PubMed:9733523). May act as a chemical magnetoreceptor, via magnetically sensitive kinetics and quantum yields of photo-induced flavin / tryptophan radical pairs (PubMed:22421133). The effect of near-null magnetic field on flowering is altered by changes of blue light cycle and intensity in a CRY1/CRY2-dependent manner (PubMed:26095447). Involved in the strigolactone signaling that regulates hypocotyl growth in response to blue light (PubMed:24126495). Modulates temperature-dependent growth and physiology maintenance, especially at warm ambient temperatures (e.g. 27 degrees Celsius) and in white light and low-light conditions, via HFR1-dependent activity; this process requires PTAC12/HMR/PAP5 (transcriptional transactivator) (PubMed:21265897, PubMed:30635559).</text>
</comment>
<comment type="function">
    <text evidence="26">Implicated in promoting R protein-mediated resistance to Pseudomonas syringae pv. tomato (Pst.) DC3000 under continuous light conditions. Promotes systemic acquired resistance (SAR) and PR gene expression triggered by P.syringae.</text>
</comment>
<comment type="cofactor">
    <cofactor evidence="19 55">
        <name>FAD</name>
        <dbReference type="ChEBI" id="CHEBI:57692"/>
    </cofactor>
    <text evidence="19 55">Binds 1 FAD per subunit.</text>
</comment>
<comment type="cofactor">
    <cofactor evidence="55">
        <name>(6R)-5,10-methylene-5,6,7,8-tetrahydrofolate</name>
        <dbReference type="ChEBI" id="CHEBI:15636"/>
    </cofactor>
    <text evidence="55">Binds 1 5,10-methenyltetrahydrofolate (MTHF) per subunit.</text>
</comment>
<comment type="activity regulation">
    <text evidence="15">Light exposure induces a conformational change in the C-terminal domain CCT1 required for activity.</text>
</comment>
<comment type="subunit">
    <text evidence="5 6 8 13 16 19 24 33 34 39 52 53 59">Homodimer. Interacts with ADO1, COP1 and PHYA. Interacts specifically with the dark/far-red (Pr) state of PHYB, but not with the red light-activated (Pfr) (PubMed:22577138). Interacts with PIF4 and PIF5 in the nucleus in response to low blue light (LBL) (PubMed:26724867). Binds to SPA1 and SPA4 in response to blue light, this interaction prevents SPA1/COP1 complex formation and thus avoid COP1-dependent degradation of the transcription factor HY5 by the proteasome and promotes hypocotyl elongation (PubMed:21511871, PubMed:21511872). Interacts with TCP2 (PubMed:26596765). Binding to ATP mediates conformational changes which facilitate flavin binding (PubMed:17073458, PubMed:19327354).</text>
</comment>
<comment type="interaction">
    <interactant intactId="EBI-300703">
        <id>Q43125</id>
    </interactant>
    <interactant intactId="EBI-301649">
        <id>P43254</id>
        <label>COP1</label>
    </interactant>
    <organismsDiffer>false</organismsDiffer>
    <experiments>4</experiments>
</comment>
<comment type="interaction">
    <interactant intactId="EBI-300703">
        <id>Q43125</id>
    </interactant>
    <interactant intactId="EBI-300703">
        <id>Q43125</id>
        <label>CRY1</label>
    </interactant>
    <organismsDiffer>false</organismsDiffer>
    <experiments>6</experiments>
</comment>
<comment type="interaction">
    <interactant intactId="EBI-300703">
        <id>Q43125</id>
    </interactant>
    <interactant intactId="EBI-630413">
        <id>P06593</id>
        <label>PHYA3</label>
    </interactant>
    <organismsDiffer>true</organismsDiffer>
    <experiments>2</experiments>
</comment>
<comment type="subcellular location">
    <subcellularLocation>
        <location evidence="21">Cytoplasm</location>
    </subcellularLocation>
    <subcellularLocation>
        <location evidence="14 21 53">Nucleus</location>
    </subcellularLocation>
    <subcellularLocation>
        <location evidence="34 35">Nucleus</location>
        <location evidence="34 35">PML body</location>
    </subcellularLocation>
    <text evidence="21 34 35">The nuclear pool is involved in hypocotyl and petiole growth inhibition and anthocyanin production, while the cytoplasmic pool is involved in root growth and cotyledon expansion (PubMed:18003924). Present in nuclear bodies (NBs) (PubMed:21511872, PubMed:21765176).</text>
</comment>
<comment type="tissue specificity">
    <text evidence="7 57">Widely expressed (PubMed:8953250). Expressed in the aerial tissues (e.g. cotyledons and leaf primordia), but not detected in the roots (PubMed:11743105).</text>
</comment>
<comment type="induction">
    <text evidence="7 45 53">Expression levels display circadian oscillations under constant conditions, with a high amplitude and an early phase, with maximal expression around 4-6 hours of the light phase. Induced by light (PubMed:11743105). Transcripts levels oscillate weakly and proportionally to temperature, but protein levels are stable, with higher levels at low temperature (12 degrees Celsius) (PubMed:23511208). Accumulates in response to low blue light (LBL) (PubMed:26724867).</text>
</comment>
<comment type="domain">
    <text>The N-terminal domain CNT1 (1-489) is sufficient for autophosphorylation and is required for dimerization. The C-terminal domain CCT1 (490-681) of the homodimer binds to COP1.</text>
</comment>
<comment type="PTM">
    <text evidence="10 12 19 59 63">Autophosphorylated; in response to blue light and when in complex with FAD cofactor (PubMed:12846824, PubMed:14523249, PubMed:17073458, PubMed:9651577). Kinase activity is optimal in the presence of magnesium ions, about 30 percent of the optimal activity in the presence of manganese ions, but inactive with calcium ions (PubMed:17073458). Adopts an open conformation when phosphorylated upon photoexcitation and thus interacts with signaling partner proteins (PubMed:21841916).</text>
</comment>
<comment type="disruption phenotype">
    <text evidence="9 11 18 20 25 26 27 28 30 31 33 34 37 40 41 42 45 46 49 50 54 56 60 61">Prevents the shortening of period at 27 degrees Celsius, resulting in a long period phenotype. The double mutant cry1 cry2 is impaired in blue light signaling, resulting in long-period, lower-amplitude oscillations at 12 and 17 degrees Celsius and completely abolishing rhythms at 27 degrees Celsius (PubMed:23511208). Plants show reduced root and hypocotyl elongation in an anion channels activation-dependent manner at the plasma membrane, as well a reduced anthocyanin accumulation in blue light (PubMed:12324610, PubMed:16703358, PubMed:21511871, PubMed:21511872, PubMed:8528277, PubMed:9765547). Impaired blue/UV-A wavelengths-mediated inhibition of shoot regeneration (PubMed:22681544). Impaired detection of blue/green ratio in light leading to abnormal inhibition of hypocotyl growth (PubMed:20668058). Altered warm-temperature (e.g. 27 degrees Celsius) responses leading to abnormal hypocotyl elongation depending on light conditions and seedling stages (PubMed:30635559). Reduced attenuating effect of high fluence rates of blue light. This phenotype is stronger in the cry1 cry2 double mutant. Slow rate of curvature at low fluence rates of blue light in cry1 cry2 (PubMed:12857830). Lower anthocyanin accumulation in the phyB cry1 double mutant exposed to far-red light. Reduced chlorophyll levels in the phyB cry1 double mutant exposed to red light. In blue light, impaired cotyledon unfolding and smaller cotyledons, longer hypocotyls and less chlorophyll (PubMed:9733523). Impaired accumulation of reactive oxygen species (ROS) in double mutant cry1 cry2 exposed to high-intensity blue light (PubMed:25728686). Altered blue-light-triggered and singlet oxygen-mediated programmed cell death (PCD) (PubMed:17075038). The double mutant cry1 cry2 exhibits a reduced impact of near-null magnetic field on flowering in lower blue light intensity and short days (PubMed:26095447). Reduced hyponastic growth (differential growth-driven upward leaf movement) in low blue light fluence (PubMed:19558423). The double mutant cry1 cry2 is hyposensitive to the strigolactone analog GR24 (PubMed:24126495). The mutant cry1 exposed to a background of red light show severely impaired stomatal opening responses to blue light. The double mutant cry1 cry2 has reduced stomatal conductance, transpiration, and photosynthesis, particularly under the high irradiance of full sunlight at midday, associated with elevated abscisic acid levels (PubMed:22147516). The cry1 mutants grown in complete darkness have premature opening of the hypocotyl hook (PubMed:22855128). Reduced expression of nuclear genes encoding photoprotective components in response to extreme high light (PubMed:22786870). Reduced shade avoidance syndrome (SAS) when exposed to blue light attenuation (PubMed:21457375). Reduced growth at warm ambient temperatures (PubMed:21265897). Down-regulated local resistance and systemic acquired resistance (SAR) to Pseudomonas syringae pv. tomato (Pst.) DC3000 under continuous light conditions, leading to pathogen proliferation (PubMed:20053798). When grown in blue light, increased growth of lateral roots and reduced sensitivity to auxin (IAA) on this phenotype (PubMed:20133010).</text>
</comment>
<comment type="similarity">
    <text evidence="69">Belongs to the DNA photolyase class-1 family.</text>
</comment>
<comment type="caution">
    <text evidence="70">Was originally thought to be a DNA photolyase.</text>
</comment>
<comment type="sequence caution" evidence="69">
    <conflict type="frameshift">
        <sequence resource="EMBL-CDS" id="AAB28725"/>
    </conflict>
</comment>
<comment type="sequence caution" evidence="69">
    <conflict type="erroneous gene model prediction">
        <sequence resource="EMBL-CDS" id="AAD17364"/>
    </conflict>
</comment>
<comment type="sequence caution" evidence="69">
    <conflict type="erroneous gene model prediction">
        <sequence resource="EMBL-CDS" id="CAB78016"/>
    </conflict>
</comment>
<evidence type="ECO:0000250" key="1">
    <source>
        <dbReference type="UniProtKB" id="Q96524"/>
    </source>
</evidence>
<evidence type="ECO:0000255" key="2"/>
<evidence type="ECO:0000256" key="3">
    <source>
        <dbReference type="SAM" id="MobiDB-lite"/>
    </source>
</evidence>
<evidence type="ECO:0000269" key="4">
    <source>
    </source>
</evidence>
<evidence type="ECO:0000269" key="5">
    <source>
    </source>
</evidence>
<evidence type="ECO:0000269" key="6">
    <source>
    </source>
</evidence>
<evidence type="ECO:0000269" key="7">
    <source>
    </source>
</evidence>
<evidence type="ECO:0000269" key="8">
    <source>
    </source>
</evidence>
<evidence type="ECO:0000269" key="9">
    <source>
    </source>
</evidence>
<evidence type="ECO:0000269" key="10">
    <source>
    </source>
</evidence>
<evidence type="ECO:0000269" key="11">
    <source>
    </source>
</evidence>
<evidence type="ECO:0000269" key="12">
    <source>
    </source>
</evidence>
<evidence type="ECO:0000269" key="13">
    <source>
    </source>
</evidence>
<evidence type="ECO:0000269" key="14">
    <source>
    </source>
</evidence>
<evidence type="ECO:0000269" key="15">
    <source>
    </source>
</evidence>
<evidence type="ECO:0000269" key="16">
    <source>
    </source>
</evidence>
<evidence type="ECO:0000269" key="17">
    <source>
    </source>
</evidence>
<evidence type="ECO:0000269" key="18">
    <source>
    </source>
</evidence>
<evidence type="ECO:0000269" key="19">
    <source>
    </source>
</evidence>
<evidence type="ECO:0000269" key="20">
    <source>
    </source>
</evidence>
<evidence type="ECO:0000269" key="21">
    <source>
    </source>
</evidence>
<evidence type="ECO:0000269" key="22">
    <source>
    </source>
</evidence>
<evidence type="ECO:0000269" key="23">
    <source>
    </source>
</evidence>
<evidence type="ECO:0000269" key="24">
    <source>
    </source>
</evidence>
<evidence type="ECO:0000269" key="25">
    <source>
    </source>
</evidence>
<evidence type="ECO:0000269" key="26">
    <source>
    </source>
</evidence>
<evidence type="ECO:0000269" key="27">
    <source>
    </source>
</evidence>
<evidence type="ECO:0000269" key="28">
    <source>
    </source>
</evidence>
<evidence type="ECO:0000269" key="29">
    <source>
    </source>
</evidence>
<evidence type="ECO:0000269" key="30">
    <source>
    </source>
</evidence>
<evidence type="ECO:0000269" key="31">
    <source>
    </source>
</evidence>
<evidence type="ECO:0000269" key="32">
    <source>
    </source>
</evidence>
<evidence type="ECO:0000269" key="33">
    <source>
    </source>
</evidence>
<evidence type="ECO:0000269" key="34">
    <source>
    </source>
</evidence>
<evidence type="ECO:0000269" key="35">
    <source>
    </source>
</evidence>
<evidence type="ECO:0000269" key="36">
    <source>
    </source>
</evidence>
<evidence type="ECO:0000269" key="37">
    <source>
    </source>
</evidence>
<evidence type="ECO:0000269" key="38">
    <source>
    </source>
</evidence>
<evidence type="ECO:0000269" key="39">
    <source>
    </source>
</evidence>
<evidence type="ECO:0000269" key="40">
    <source>
    </source>
</evidence>
<evidence type="ECO:0000269" key="41">
    <source>
    </source>
</evidence>
<evidence type="ECO:0000269" key="42">
    <source>
    </source>
</evidence>
<evidence type="ECO:0000269" key="43">
    <source>
    </source>
</evidence>
<evidence type="ECO:0000269" key="44">
    <source>
    </source>
</evidence>
<evidence type="ECO:0000269" key="45">
    <source>
    </source>
</evidence>
<evidence type="ECO:0000269" key="46">
    <source>
    </source>
</evidence>
<evidence type="ECO:0000269" key="47">
    <source>
    </source>
</evidence>
<evidence type="ECO:0000269" key="48">
    <source>
    </source>
</evidence>
<evidence type="ECO:0000269" key="49">
    <source>
    </source>
</evidence>
<evidence type="ECO:0000269" key="50">
    <source>
    </source>
</evidence>
<evidence type="ECO:0000269" key="51">
    <source>
    </source>
</evidence>
<evidence type="ECO:0000269" key="52">
    <source>
    </source>
</evidence>
<evidence type="ECO:0000269" key="53">
    <source>
    </source>
</evidence>
<evidence type="ECO:0000269" key="54">
    <source>
    </source>
</evidence>
<evidence type="ECO:0000269" key="55">
    <source>
    </source>
</evidence>
<evidence type="ECO:0000269" key="56">
    <source>
    </source>
</evidence>
<evidence type="ECO:0000269" key="57">
    <source>
    </source>
</evidence>
<evidence type="ECO:0000269" key="58">
    <source>
    </source>
</evidence>
<evidence type="ECO:0000269" key="59">
    <source>
    </source>
</evidence>
<evidence type="ECO:0000269" key="60">
    <source>
    </source>
</evidence>
<evidence type="ECO:0000269" key="61">
    <source>
    </source>
</evidence>
<evidence type="ECO:0000303" key="62">
    <source>
    </source>
</evidence>
<evidence type="ECO:0000303" key="63">
    <source>
    </source>
</evidence>
<evidence type="ECO:0000303" key="64">
    <source>
    </source>
</evidence>
<evidence type="ECO:0000303" key="65">
    <source>
    </source>
</evidence>
<evidence type="ECO:0000303" key="66">
    <source>
    </source>
</evidence>
<evidence type="ECO:0000303" key="67">
    <source>
    </source>
</evidence>
<evidence type="ECO:0000303" key="68">
    <source>
    </source>
</evidence>
<evidence type="ECO:0000305" key="69"/>
<evidence type="ECO:0000305" key="70">
    <source>
    </source>
</evidence>
<evidence type="ECO:0000312" key="71">
    <source>
        <dbReference type="Araport" id="AT4G08920"/>
    </source>
</evidence>
<evidence type="ECO:0000312" key="72">
    <source>
        <dbReference type="EMBL" id="AAD17364.1"/>
    </source>
</evidence>
<evidence type="ECO:0007744" key="73">
    <source>
        <dbReference type="PDB" id="1U3C"/>
    </source>
</evidence>
<evidence type="ECO:0007744" key="74">
    <source>
        <dbReference type="PDB" id="1U3D"/>
    </source>
</evidence>
<evidence type="ECO:0007829" key="75">
    <source>
        <dbReference type="PDB" id="1U3C"/>
    </source>
</evidence>
<evidence type="ECO:0007829" key="76">
    <source>
        <dbReference type="PDB" id="1U3D"/>
    </source>
</evidence>
<protein>
    <recommendedName>
        <fullName evidence="68">Cryptochrome-1</fullName>
        <shortName evidence="64">AtCry</shortName>
        <shortName evidence="68">Atcry1</shortName>
    </recommendedName>
    <alternativeName>
        <fullName evidence="66">Blue light photoreceptor</fullName>
    </alternativeName>
    <alternativeName>
        <fullName evidence="62">Protein BLUE LIGHT UNINHIBITED 1</fullName>
    </alternativeName>
    <alternativeName>
        <fullName evidence="67">Protein ELONGATED HYPOCOTYL 4</fullName>
    </alternativeName>
    <alternativeName>
        <fullName>Protein OUT OF PHASE 2</fullName>
        <shortName>OOP2</shortName>
    </alternativeName>
</protein>
<feature type="chain" id="PRO_0000085121" description="Cryptochrome-1">
    <location>
        <begin position="1"/>
        <end position="681"/>
    </location>
</feature>
<feature type="domain" description="Photolyase/cryptochrome alpha/beta" evidence="2">
    <location>
        <begin position="12"/>
        <end position="141"/>
    </location>
</feature>
<feature type="region of interest" description="CNT1, binds chromophores to sense blue light and mediate CRY dimerization" evidence="65">
    <location>
        <begin position="1"/>
        <end position="489"/>
    </location>
</feature>
<feature type="region of interest" description="CCT1/CCE1, mediates blue light signaling" evidence="4 65">
    <location>
        <begin position="490"/>
        <end position="681"/>
    </location>
</feature>
<feature type="region of interest" description="Disordered" evidence="3">
    <location>
        <begin position="525"/>
        <end position="598"/>
    </location>
</feature>
<feature type="region of interest" description="Disordered" evidence="3">
    <location>
        <begin position="616"/>
        <end position="664"/>
    </location>
</feature>
<feature type="compositionally biased region" description="Polar residues" evidence="3">
    <location>
        <begin position="583"/>
        <end position="598"/>
    </location>
</feature>
<feature type="binding site" evidence="13 73 74">
    <location>
        <position position="235"/>
    </location>
    <ligand>
        <name>FAD</name>
        <dbReference type="ChEBI" id="CHEBI:57692"/>
    </ligand>
</feature>
<feature type="binding site" evidence="13 73">
    <location>
        <position position="238"/>
    </location>
    <ligand>
        <name>Mg(2+)</name>
        <dbReference type="ChEBI" id="CHEBI:18420"/>
        <label>1</label>
    </ligand>
</feature>
<feature type="binding site" evidence="13 74">
    <location>
        <position position="239"/>
    </location>
    <ligand>
        <name>ATP</name>
        <dbReference type="ChEBI" id="CHEBI:30616"/>
    </ligand>
</feature>
<feature type="binding site" evidence="13 73">
    <location>
        <position position="241"/>
    </location>
    <ligand>
        <name>Mg(2+)</name>
        <dbReference type="ChEBI" id="CHEBI:18420"/>
        <label>2</label>
    </ligand>
</feature>
<feature type="binding site" evidence="13 73 74">
    <location>
        <position position="244"/>
    </location>
    <ligand>
        <name>Mg(2+)</name>
        <dbReference type="ChEBI" id="CHEBI:18420"/>
        <label>2</label>
    </ligand>
</feature>
<feature type="binding site" evidence="13 73">
    <location>
        <position position="246"/>
    </location>
    <ligand>
        <name>Mg(2+)</name>
        <dbReference type="ChEBI" id="CHEBI:18420"/>
        <label>1</label>
    </ligand>
</feature>
<feature type="binding site" evidence="13 73 74">
    <location>
        <position position="246"/>
    </location>
    <ligand>
        <name>Mg(2+)</name>
        <dbReference type="ChEBI" id="CHEBI:18420"/>
        <label>2</label>
    </ligand>
</feature>
<feature type="binding site" evidence="13 73 74">
    <location>
        <begin position="247"/>
        <end position="251"/>
    </location>
    <ligand>
        <name>FAD</name>
        <dbReference type="ChEBI" id="CHEBI:57692"/>
    </ligand>
</feature>
<feature type="binding site" evidence="13 74">
    <location>
        <position position="293"/>
    </location>
    <ligand>
        <name>FAD</name>
        <dbReference type="ChEBI" id="CHEBI:57692"/>
    </ligand>
</feature>
<feature type="binding site" evidence="13 73">
    <location>
        <position position="358"/>
    </location>
    <ligand>
        <name>Mg(2+)</name>
        <dbReference type="ChEBI" id="CHEBI:18420"/>
        <label>1</label>
    </ligand>
</feature>
<feature type="binding site" evidence="13 74">
    <location>
        <begin position="359"/>
        <end position="360"/>
    </location>
    <ligand>
        <name>ATP</name>
        <dbReference type="ChEBI" id="CHEBI:30616"/>
    </ligand>
</feature>
<feature type="binding site" evidence="13 73 74">
    <location>
        <position position="359"/>
    </location>
    <ligand>
        <name>FAD</name>
        <dbReference type="ChEBI" id="CHEBI:57692"/>
    </ligand>
</feature>
<feature type="binding site" evidence="13 73 74">
    <location>
        <begin position="390"/>
        <end position="392"/>
    </location>
    <ligand>
        <name>FAD</name>
        <dbReference type="ChEBI" id="CHEBI:57692"/>
    </ligand>
</feature>
<feature type="binding site" evidence="13 74">
    <location>
        <position position="409"/>
    </location>
    <ligand>
        <name>ATP</name>
        <dbReference type="ChEBI" id="CHEBI:30616"/>
    </ligand>
</feature>
<feature type="site" description="Involved in electron transfer from the protein surface to the FAD cofactor" evidence="51 64">
    <location>
        <position position="324"/>
    </location>
</feature>
<feature type="site" description="Involved in electron transfer from the protein surface to the FAD cofactor" evidence="64">
    <location>
        <position position="377"/>
    </location>
</feature>
<feature type="site" description="Involved in electron transfer from the protein surface to the FAD cofactor" evidence="51 64">
    <location>
        <position position="400"/>
    </location>
</feature>
<feature type="modified residue" description="Phosphoserine" evidence="1">
    <location>
        <position position="616"/>
    </location>
</feature>
<feature type="modified residue" description="Phosphothreonine" evidence="1">
    <location>
        <position position="621"/>
    </location>
</feature>
<feature type="disulfide bond" evidence="13 73 74">
    <location>
        <begin position="80"/>
        <end position="190"/>
    </location>
</feature>
<feature type="mutagenesis site" description="In cry1-401; genomes uncoupled mutant (gun) with defects in plastid-to-nucleus signaling." evidence="22">
    <original>D</original>
    <variation>N</variation>
    <location>
        <position position="21"/>
    </location>
</feature>
<feature type="mutagenesis site" description="Loss of dimerization and activity. Abnormal hypocotyl elongation in blue light." evidence="16 48">
    <original>S</original>
    <variation>N</variation>
    <location>
        <position position="66"/>
    </location>
</feature>
<feature type="mutagenesis site" description="In hy4-6; reduced anthocyanin accumulation and abnormal hypocotyl elongation in blue light." evidence="48 56">
    <original>G</original>
    <variation>D</variation>
    <location>
        <position position="220"/>
    </location>
</feature>
<feature type="mutagenesis site" description="In hy4-5; reduced anthocyanin accumulation and abnormal hypocotyl elongation in blue light." evidence="48 56">
    <original>G</original>
    <variation>E</variation>
    <location>
        <position position="283"/>
    </location>
</feature>
<feature type="mutagenesis site" description="In cry1-402; genomes uncoupled mutant (gun) with defects in plastid-to-nucleus signaling." evidence="22">
    <original>S</original>
    <variation>N</variation>
    <location>
        <position position="286"/>
    </location>
</feature>
<feature type="mutagenesis site" description="Impaired photoreduction in vitro, but not in vivo or in whole cell extracts, due to an alternative electron transport that involves small metabolites. Abolished intra-protein electron transfer cascade and impaired conformational change upon photoexcitation." evidence="36 51">
    <original>W</original>
    <variation>F</variation>
    <location>
        <position position="324"/>
    </location>
</feature>
<feature type="mutagenesis site" description="Abnormal hypocotyl elongation in blue light." evidence="48">
    <original>G</original>
    <variation>D</variation>
    <location>
        <position position="337"/>
    </location>
</feature>
<feature type="mutagenesis site" description="In cry1-404 and hy4-1; reduced anthocyanin accumulation and abnormal hypocotyl elongation in blue light. Loss of activity. Genomes uncoupled mutant (gun) with defects in plastid-to-nucleus signaling." evidence="22 48 56 58">
    <original>G</original>
    <variation>E</variation>
    <location>
        <position position="340"/>
    </location>
</feature>
<feature type="mutagenesis site" description="In hy4-16; reduced anthocyanin accumulation and abnormal hypocotyl elongation in blue light." evidence="48 56">
    <original>G</original>
    <variation>E</variation>
    <location>
        <position position="347"/>
    </location>
</feature>
<feature type="mutagenesis site" description="In hy4-15; reduced anthocyanin accumulation and abnormal hypocotyl elongation in blue light. Loss of dimerization and activity." evidence="16 48 56">
    <original>G</original>
    <variation>R</variation>
    <location>
        <position position="347"/>
    </location>
</feature>
<feature type="mutagenesis site" description="Constitutive light response." evidence="35">
    <original>G</original>
    <variation>R</variation>
    <location>
        <position position="380"/>
    </location>
</feature>
<feature type="mutagenesis site" description="Upon illumination, formation of the reduced anionic flavin (RED) flavin, useful for DNA repair, rather than the semi-reduced radical form (SR) flavin, which is correlated with cryptochrome activity." evidence="43">
    <original>D</original>
    <variation>N</variation>
    <location>
        <position position="396"/>
    </location>
</feature>
<feature type="mutagenesis site" description="Impaired photoreduction in vitro, but not in vivo or whole cell extracts, due to an alternative electron transport that involves small metabolites." evidence="51">
    <original>W</original>
    <variation>F</variation>
    <location>
        <position position="400"/>
    </location>
</feature>
<feature type="mutagenesis site" description="Gain of function mutant. Hypersensitive toward blue, red, and far-red light in hypocotyl growth inhibition. Very early flowering in short-day conditions, associated with enhanced expression of CO and FT. Impaired interaction with PHYB." evidence="29 39">
    <original>L</original>
    <variation>F</variation>
    <location>
        <position position="407"/>
    </location>
</feature>
<feature type="mutagenesis site" description="Loss of dimerization and activity. Abnormal hypocotyl elongation in blue light." evidence="16 48">
    <original>A</original>
    <variation>V</variation>
    <location>
        <position position="462"/>
    </location>
</feature>
<feature type="mutagenesis site" description="In hy4-19; reduced anthocyanin accumulation and abnormal hypocotyl elongation in blue light." evidence="56">
    <original>E</original>
    <variation>K</variation>
    <location>
        <position position="515"/>
    </location>
</feature>
<feature type="mutagenesis site" description="In hy4-20; reduced anthocyanin accumulation and abnormal hypocotyl elongation in blue light." evidence="56">
    <original>E</original>
    <variation>K</variation>
    <location>
        <position position="531"/>
    </location>
</feature>
<feature type="mutagenesis site" description="In hy4-9; reduced anthocyanin accumulation and abnormal hypocotyl elongation in blue light." evidence="56">
    <original>P</original>
    <variation>L</variation>
    <location>
        <position position="549"/>
    </location>
</feature>
<feature type="mutagenesis site" description="In hy4-22; reduced anthocyanin accumulation and abnormal hypocotyl elongation in blue light." evidence="56">
    <original>E</original>
    <variation>K</variation>
    <location>
        <position position="559"/>
    </location>
</feature>
<feature type="mutagenesis site" description="In hy4-10; reduced anthocyanin accumulation and abnormal hypocotyl elongation in blue light." evidence="56">
    <original>R</original>
    <variation>K</variation>
    <location>
        <position position="576"/>
    </location>
</feature>
<feature type="mutagenesis site" description="In hy4-23; reduced anthocyanin accumulation and abnormal hypocotyl elongation in blue light." evidence="56">
    <original>R</original>
    <variation>K</variation>
    <location>
        <position position="581"/>
    </location>
</feature>
<feature type="mutagenesis site" description="In hy4-24; reduced anthocyanin accumulation and abnormal hypocotyl elongation in blue light." evidence="56">
    <original>R</original>
    <variation>K</variation>
    <location>
        <position position="611"/>
    </location>
</feature>
<feature type="mutagenesis site" description="In cry1-403; genomes uncoupled mutant (gun) with defects in plastid-to-nucleus signaling." evidence="22">
    <original>E</original>
    <variation>K</variation>
    <location>
        <position position="623"/>
    </location>
</feature>
<feature type="sequence conflict" description="In Ref. 4; AAK32756." evidence="69" ref="4">
    <original>I</original>
    <variation>N</variation>
    <location>
        <position position="40"/>
    </location>
</feature>
<feature type="sequence conflict" description="In Ref. 1; AAB28724." evidence="69" ref="1">
    <original>G</original>
    <variation>R</variation>
    <location>
        <position position="654"/>
    </location>
</feature>
<feature type="strand" evidence="76">
    <location>
        <begin position="14"/>
        <end position="20"/>
    </location>
</feature>
<feature type="strand" evidence="75">
    <location>
        <begin position="24"/>
        <end position="26"/>
    </location>
</feature>
<feature type="helix" evidence="76">
    <location>
        <begin position="28"/>
        <end position="36"/>
    </location>
</feature>
<feature type="strand" evidence="76">
    <location>
        <begin position="39"/>
        <end position="45"/>
    </location>
</feature>
<feature type="helix" evidence="76">
    <location>
        <begin position="47"/>
        <end position="50"/>
    </location>
</feature>
<feature type="helix" evidence="76">
    <location>
        <begin position="57"/>
        <end position="76"/>
    </location>
</feature>
<feature type="strand" evidence="76">
    <location>
        <begin position="81"/>
        <end position="85"/>
    </location>
</feature>
<feature type="helix" evidence="76">
    <location>
        <begin position="89"/>
        <end position="100"/>
    </location>
</feature>
<feature type="strand" evidence="76">
    <location>
        <begin position="104"/>
        <end position="108"/>
    </location>
</feature>
<feature type="helix" evidence="76">
    <location>
        <begin position="113"/>
        <end position="127"/>
    </location>
</feature>
<feature type="turn" evidence="76">
    <location>
        <begin position="128"/>
        <end position="130"/>
    </location>
</feature>
<feature type="strand" evidence="76">
    <location>
        <begin position="132"/>
        <end position="136"/>
    </location>
</feature>
<feature type="helix" evidence="76">
    <location>
        <begin position="144"/>
        <end position="146"/>
    </location>
</feature>
<feature type="strand" evidence="76">
    <location>
        <begin position="150"/>
        <end position="152"/>
    </location>
</feature>
<feature type="helix" evidence="76">
    <location>
        <begin position="158"/>
        <end position="166"/>
    </location>
</feature>
<feature type="helix" evidence="76">
    <location>
        <begin position="187"/>
        <end position="189"/>
    </location>
</feature>
<feature type="helix" evidence="76">
    <location>
        <begin position="200"/>
        <end position="206"/>
    </location>
</feature>
<feature type="helix" evidence="76">
    <location>
        <begin position="209"/>
        <end position="212"/>
    </location>
</feature>
<feature type="helix" evidence="76">
    <location>
        <begin position="217"/>
        <end position="228"/>
    </location>
</feature>
<feature type="helix" evidence="76">
    <location>
        <begin position="231"/>
        <end position="234"/>
    </location>
</feature>
<feature type="turn" evidence="76">
    <location>
        <begin position="235"/>
        <end position="240"/>
    </location>
</feature>
<feature type="strand" evidence="76">
    <location>
        <begin position="242"/>
        <end position="244"/>
    </location>
</feature>
<feature type="helix" evidence="76">
    <location>
        <begin position="251"/>
        <end position="255"/>
    </location>
</feature>
<feature type="helix" evidence="76">
    <location>
        <begin position="261"/>
        <end position="278"/>
    </location>
</feature>
<feature type="helix" evidence="76">
    <location>
        <begin position="281"/>
        <end position="305"/>
    </location>
</feature>
<feature type="turn" evidence="76">
    <location>
        <begin position="308"/>
        <end position="312"/>
    </location>
</feature>
<feature type="turn" evidence="76">
    <location>
        <begin position="318"/>
        <end position="321"/>
    </location>
</feature>
<feature type="helix" evidence="76">
    <location>
        <begin position="328"/>
        <end position="336"/>
    </location>
</feature>
<feature type="helix" evidence="76">
    <location>
        <begin position="342"/>
        <end position="354"/>
    </location>
</feature>
<feature type="helix" evidence="76">
    <location>
        <begin position="359"/>
        <end position="371"/>
    </location>
</feature>
<feature type="helix" evidence="76">
    <location>
        <begin position="377"/>
        <end position="387"/>
    </location>
</feature>
<feature type="helix" evidence="76">
    <location>
        <begin position="393"/>
        <end position="404"/>
    </location>
</feature>
<feature type="helix" evidence="76">
    <location>
        <begin position="419"/>
        <end position="426"/>
    </location>
</feature>
<feature type="helix" evidence="76">
    <location>
        <begin position="431"/>
        <end position="436"/>
    </location>
</feature>
<feature type="helix" evidence="76">
    <location>
        <begin position="438"/>
        <end position="440"/>
    </location>
</feature>
<feature type="helix" evidence="76">
    <location>
        <begin position="445"/>
        <end position="448"/>
    </location>
</feature>
<feature type="turn" evidence="76">
    <location>
        <begin position="451"/>
        <end position="453"/>
    </location>
</feature>
<feature type="helix" evidence="76">
    <location>
        <begin position="456"/>
        <end position="462"/>
    </location>
</feature>
<feature type="turn" evidence="76">
    <location>
        <begin position="467"/>
        <end position="469"/>
    </location>
</feature>
<feature type="helix" evidence="76">
    <location>
        <begin position="477"/>
        <end position="495"/>
    </location>
</feature>
<keyword id="KW-0002">3D-structure</keyword>
<keyword id="KW-0053">Apoptosis</keyword>
<keyword id="KW-0067">ATP-binding</keyword>
<keyword id="KW-0157">Chromophore</keyword>
<keyword id="KW-0963">Cytoplasm</keyword>
<keyword id="KW-1015">Disulfide bond</keyword>
<keyword id="KW-0274">FAD</keyword>
<keyword id="KW-0285">Flavoprotein</keyword>
<keyword id="KW-0460">Magnesium</keyword>
<keyword id="KW-0479">Metal-binding</keyword>
<keyword id="KW-0547">Nucleotide-binding</keyword>
<keyword id="KW-0539">Nucleus</keyword>
<keyword id="KW-0597">Phosphoprotein</keyword>
<keyword id="KW-0600">Photoreceptor protein</keyword>
<keyword id="KW-0611">Plant defense</keyword>
<keyword id="KW-0675">Receptor</keyword>
<keyword id="KW-1185">Reference proteome</keyword>
<keyword id="KW-0716">Sensory transduction</keyword>
<accession>Q43125</accession>
<accession>Q43126</accession>
<accession>Q8L7Y1</accession>
<accession>Q9ASZ2</accession>
<accession>Q9M0S9</accession>
<accession>Q9ZPF0</accession>
<sequence length="681" mass="76695">MSGSVSGCGSGGCSIVWFRRDLRVEDNPALAAAVRAGPVIALFVWAPEEEGHYHPGRVSRWWLKNSLAQLDSSLRSLGTCLITKRSTDSVASLLDVVKSTGASQIFFNHLYDPLSLVRDHRAKDVLTAQGIAVRSFNADLLYEPWEVTDELGRPFSMFAAFWERCLSMPYDPESPLLPPKKIISGDVSKCVADPLVFEDDSEKGSNALLARAWSPGWSNGDKALTTFINGPLLEYSKNRRKADSATTSFLSPHLHFGEVSVRKVFHLVRIKQVAWANEGNEAGEESVNLFLKSIGLREYSRYISFNHPYSHERPLLGHLKFFPWAVDENYFKAWRQGRTGYPLVDAGMRELWATGWLHDRIRVVVSSFFVKVLQLPWRWGMKYFWDTLLDADLESDALGWQYITGTLPDSREFDRIDNPQFEGYKFDPNGEYVRRWLPELSRLPTDWIHHPWNAPESVLQAAGIELGSNYPLPIVGLDEAKARLHEALSQMWQLEAASRAAIENGSEEGLGDSAEVEEAPIEFPRDITMEETEPTRLNPNRRYEDQMVPSITSSLIRPEEDEESSLNLRNSVGDSRAEVPRNMVNTNQAQQRRAEPASNQVTAMIPEFNIRIVAESTEDSTAESSSSGRRERSGGIVPEWSPGYSEQFPSEENGIGGGSTTSSYLQNHHEILNWRRLSQTG</sequence>
<organism>
    <name type="scientific">Arabidopsis thaliana</name>
    <name type="common">Mouse-ear cress</name>
    <dbReference type="NCBI Taxonomy" id="3702"/>
    <lineage>
        <taxon>Eukaryota</taxon>
        <taxon>Viridiplantae</taxon>
        <taxon>Streptophyta</taxon>
        <taxon>Embryophyta</taxon>
        <taxon>Tracheophyta</taxon>
        <taxon>Spermatophyta</taxon>
        <taxon>Magnoliopsida</taxon>
        <taxon>eudicotyledons</taxon>
        <taxon>Gunneridae</taxon>
        <taxon>Pentapetalae</taxon>
        <taxon>rosids</taxon>
        <taxon>malvids</taxon>
        <taxon>Brassicales</taxon>
        <taxon>Brassicaceae</taxon>
        <taxon>Camelineae</taxon>
        <taxon>Arabidopsis</taxon>
    </lineage>
</organism>
<proteinExistence type="evidence at protein level"/>
<gene>
    <name evidence="68" type="primary">CRY1</name>
    <name evidence="62" type="synonym">BLU1</name>
    <name evidence="67" type="synonym">HY4</name>
    <name evidence="71" type="ordered locus">At4g08920</name>
    <name evidence="72" type="ORF">T3H13.14</name>
    <name evidence="72" type="ORF">T3H13.5</name>
</gene>